<protein>
    <recommendedName>
        <fullName evidence="32">Inositol 1,4,5-trisphosphate-gated calcium channel ITPR1</fullName>
    </recommendedName>
    <alternativeName>
        <fullName>IP3 receptor isoform 1</fullName>
        <shortName>IP3R 1</shortName>
        <shortName evidence="30">InsP3R1</shortName>
    </alternativeName>
    <alternativeName>
        <fullName evidence="31">Inositol 1,4,5 trisphosphate receptor</fullName>
    </alternativeName>
    <alternativeName>
        <fullName evidence="28">Inositol 1,4,5-trisphosphate receptor type 1</fullName>
    </alternativeName>
    <alternativeName>
        <fullName evidence="29 30">Type 1 inositol 1,4,5-trisphosphate receptor</fullName>
        <shortName>Type 1 InsP3 receptor</shortName>
    </alternativeName>
</protein>
<keyword id="KW-0025">Alternative splicing</keyword>
<keyword id="KW-0053">Apoptosis</keyword>
<keyword id="KW-0067">ATP-binding</keyword>
<keyword id="KW-0106">Calcium</keyword>
<keyword id="KW-0107">Calcium channel</keyword>
<keyword id="KW-0109">Calcium transport</keyword>
<keyword id="KW-0963">Cytoplasm</keyword>
<keyword id="KW-0968">Cytoplasmic vesicle</keyword>
<keyword id="KW-0225">Disease variant</keyword>
<keyword id="KW-1015">Disulfide bond</keyword>
<keyword id="KW-0256">Endoplasmic reticulum</keyword>
<keyword id="KW-0325">Glycoprotein</keyword>
<keyword id="KW-0991">Intellectual disability</keyword>
<keyword id="KW-0407">Ion channel</keyword>
<keyword id="KW-0406">Ion transport</keyword>
<keyword id="KW-1017">Isopeptide bond</keyword>
<keyword id="KW-1071">Ligand-gated ion channel</keyword>
<keyword id="KW-0449">Lipoprotein</keyword>
<keyword id="KW-0472">Membrane</keyword>
<keyword id="KW-0479">Metal-binding</keyword>
<keyword id="KW-0523">Neurodegeneration</keyword>
<keyword id="KW-0547">Nucleotide-binding</keyword>
<keyword id="KW-0564">Palmitate</keyword>
<keyword id="KW-0597">Phosphoprotein</keyword>
<keyword id="KW-1267">Proteomics identification</keyword>
<keyword id="KW-0675">Receptor</keyword>
<keyword id="KW-1185">Reference proteome</keyword>
<keyword id="KW-0677">Repeat</keyword>
<keyword id="KW-0950">Spinocerebellar ataxia</keyword>
<keyword id="KW-0812">Transmembrane</keyword>
<keyword id="KW-1133">Transmembrane helix</keyword>
<keyword id="KW-0813">Transport</keyword>
<keyword id="KW-0832">Ubl conjugation</keyword>
<keyword id="KW-0862">Zinc</keyword>
<name>ITPR1_HUMAN</name>
<evidence type="ECO:0000250" key="1">
    <source>
        <dbReference type="UniProtKB" id="P11881"/>
    </source>
</evidence>
<evidence type="ECO:0000250" key="2">
    <source>
        <dbReference type="UniProtKB" id="P29994"/>
    </source>
</evidence>
<evidence type="ECO:0000250" key="3">
    <source>
        <dbReference type="UniProtKB" id="Q14573"/>
    </source>
</evidence>
<evidence type="ECO:0000250" key="4">
    <source>
        <dbReference type="UniProtKB" id="Q9TU34"/>
    </source>
</evidence>
<evidence type="ECO:0000255" key="5"/>
<evidence type="ECO:0000255" key="6">
    <source>
        <dbReference type="PROSITE-ProRule" id="PRU00131"/>
    </source>
</evidence>
<evidence type="ECO:0000256" key="7">
    <source>
        <dbReference type="SAM" id="MobiDB-lite"/>
    </source>
</evidence>
<evidence type="ECO:0000269" key="8">
    <source>
    </source>
</evidence>
<evidence type="ECO:0000269" key="9">
    <source>
    </source>
</evidence>
<evidence type="ECO:0000269" key="10">
    <source>
    </source>
</evidence>
<evidence type="ECO:0000269" key="11">
    <source>
    </source>
</evidence>
<evidence type="ECO:0000269" key="12">
    <source>
    </source>
</evidence>
<evidence type="ECO:0000269" key="13">
    <source>
    </source>
</evidence>
<evidence type="ECO:0000269" key="14">
    <source>
    </source>
</evidence>
<evidence type="ECO:0000269" key="15">
    <source>
    </source>
</evidence>
<evidence type="ECO:0000269" key="16">
    <source>
    </source>
</evidence>
<evidence type="ECO:0000269" key="17">
    <source>
    </source>
</evidence>
<evidence type="ECO:0000269" key="18">
    <source>
    </source>
</evidence>
<evidence type="ECO:0000269" key="19">
    <source>
    </source>
</evidence>
<evidence type="ECO:0000269" key="20">
    <source>
    </source>
</evidence>
<evidence type="ECO:0000269" key="21">
    <source>
    </source>
</evidence>
<evidence type="ECO:0000269" key="22">
    <source>
    </source>
</evidence>
<evidence type="ECO:0000269" key="23">
    <source>
    </source>
</evidence>
<evidence type="ECO:0000269" key="24">
    <source>
    </source>
</evidence>
<evidence type="ECO:0000269" key="25">
    <source>
    </source>
</evidence>
<evidence type="ECO:0000269" key="26">
    <source>
    </source>
</evidence>
<evidence type="ECO:0000269" key="27">
    <source>
    </source>
</evidence>
<evidence type="ECO:0000303" key="28">
    <source>
    </source>
</evidence>
<evidence type="ECO:0000303" key="29">
    <source>
    </source>
</evidence>
<evidence type="ECO:0000303" key="30">
    <source>
    </source>
</evidence>
<evidence type="ECO:0000303" key="31">
    <source>
    </source>
</evidence>
<evidence type="ECO:0000305" key="32"/>
<evidence type="ECO:0000305" key="33">
    <source>
    </source>
</evidence>
<evidence type="ECO:0000305" key="34">
    <source>
    </source>
</evidence>
<evidence type="ECO:0000312" key="35">
    <source>
        <dbReference type="HGNC" id="HGNC:6180"/>
    </source>
</evidence>
<evidence type="ECO:0007744" key="36">
    <source>
    </source>
</evidence>
<evidence type="ECO:0007744" key="37">
    <source>
    </source>
</evidence>
<evidence type="ECO:0007744" key="38">
    <source>
    </source>
</evidence>
<evidence type="ECO:0007744" key="39">
    <source>
    </source>
</evidence>
<evidence type="ECO:0007744" key="40">
    <source>
    </source>
</evidence>
<proteinExistence type="evidence at protein level"/>
<comment type="function">
    <text evidence="1 2 8 22">Inositol 1,4,5-trisphosphate-gated calcium channel that, upon inositol 1,4,5-trisphosphate binding, mediates calcium release from the endoplasmic reticulum (ER) (PubMed:10620513, PubMed:27108797). Undergoes conformational changes upon ligand binding, suggesting structural flexibility that allows the channel to switch from a closed state, capable of interacting with its ligands such as 1,4,5-trisphosphate and calcium, to an open state, capable of transferring calcium ions across the ER membrane (By similarity). Cytoplasmic calcium released from the ER triggers apoptosis by the activation of CAMK2 complex (By similarity). Involved in the regulation of epithelial secretion of electrolytes and fluid through the interaction with AHCYL1 (By similarity). Part of a complex composed of HSPA9, ITPR1 and VDAC1 that regulates mitochondrial calcium-dependent apoptosis by facilitating calcium transport from the ER lumen to the mitochondria intermembrane space thus providing calcium for the downstream calcium channel MCU that directly releases it into mitochondria matrix (By similarity). Regulates fertilization and egg activation by tuning the frequency and amplitude of calcium oscillations (By similarity).</text>
</comment>
<comment type="catalytic activity">
    <reaction evidence="8 22">
        <text>Ca(2+)(in) = Ca(2+)(out)</text>
        <dbReference type="Rhea" id="RHEA:29671"/>
        <dbReference type="ChEBI" id="CHEBI:29108"/>
    </reaction>
</comment>
<comment type="activity regulation">
    <text evidence="1 2 8">Inositol 1,4,5-trisphosphate-gated calcium channel activity is regulated by cytosolic calcium in a biphasic manner, with low concentrations causing activation and higher concentrations inhibiting channel opening, giving rise to calcium oscillations. ATP increases the open probability of ITPR1 by synergizing with the activating effect of these two primarily ligands, inositol 1,4,5-trisphosphate and calcium (By similarity). Inositol 1,4,5-trisphosphate-gated calcium channel activity is activated by zinc ions (By similarity). Inositol 1,4,5-trisphosphate-gated calcium channel activity is inhibited by CALM1 in a calcium-dependent manner (PubMed:10620513).</text>
</comment>
<comment type="subunit">
    <text evidence="1 2 4 9 10 11 12 13 17 19 20 24">Homotetramer (By similarity). Homodimer (By similarity). Interacts with ERP44 in a pH-, redox state- and calcium-dependent manner which results in the inhibition the calcium channel activity (PubMed:15652484). The strength of this interaction inversely correlates with calcium concentration (PubMed:15652484). Part of cGMP kinase signaling complex at least composed of ACTA2/alpha-actin, CNN1/calponin H1, PLN/phospholamban, PRKG1 and ITPR1 (By similarity). Interacts with IRAG1 (PubMed:16990611). Interacts with CABP1 (via N-terminus) (PubMed:12032348, PubMed:14685260). Interacts with TESPA1 (PubMed:23650607). Interacts (when not phosphorylated) with AHCYL1 (when phosphorylated); the interaction suppresses inositol 1,4,5-trisphosphate binding to ITPR1 and is increased in the presence of BCL2L10 (PubMed:16793548, PubMed:27995898). Interacts with AHCYL2 (with lower affinity than with AHCYL1) (PubMed:19220705). Interacts with BCL2L10; the interaction is increased in the presence of AHCLY1 (PubMed:27995898). Interacts with BOK (via BH4 domain); protects ITPR1 from proteolysis by CASP3 during apoptosis (PubMed:23884412). Interacts with TRPC4 (By similarity). Interacts with CHGA and CHGB (By similarity). Interacts with CALM1; this interaction inhibits inositol 1,4,5 trisphosphate binding in both the presence and absence of calcium and 1,4,5 trisphosphate-induced calcium release in the presence of calcium (By similarity). Interacts with the complex composed by ERLIN1, ERLIN2 and RNF170 through ERLIN2; this interaction triggers its ubiquitin-proteasomal degradation (By similarity). Interacts with HSPA9; this interaction couples ITPR1 to VDAC1 (By similarity).</text>
</comment>
<comment type="interaction">
    <interactant intactId="EBI-465548">
        <id>Q14643</id>
    </interactant>
    <interactant intactId="EBI-2371423">
        <id>O43865</id>
        <label>AHCYL1</label>
    </interactant>
    <organismsDiffer>false</organismsDiffer>
    <experiments>3</experiments>
</comment>
<comment type="interaction">
    <interactant intactId="EBI-465548">
        <id>Q14643</id>
    </interactant>
    <interactant intactId="EBI-2126349">
        <id>Q9HD36</id>
        <label>BCL2L10</label>
    </interactant>
    <organismsDiffer>false</organismsDiffer>
    <experiments>7</experiments>
</comment>
<comment type="subcellular location">
    <subcellularLocation>
        <location evidence="33 34">Endoplasmic reticulum membrane</location>
        <topology evidence="2 5">Multi-pass membrane protein</topology>
    </subcellularLocation>
    <subcellularLocation>
        <location evidence="4">Cytoplasmic vesicle</location>
        <location evidence="4">Secretory vesicle membrane</location>
        <topology evidence="2 5">Multi-pass membrane protein</topology>
    </subcellularLocation>
    <subcellularLocation>
        <location evidence="23">Cytoplasm</location>
        <location evidence="23">Perinuclear region</location>
    </subcellularLocation>
    <text evidence="2">Found in a complex with HSPA9 and VDAC1 at the endoplasmic reticulum-mitochondria contact sites.</text>
</comment>
<comment type="alternative products">
    <event type="alternative splicing"/>
    <isoform>
        <id>Q14643-1</id>
        <name>1</name>
        <name>SISIIISIIAC</name>
        <sequence type="displayed"/>
    </isoform>
    <isoform>
        <id>Q14643-2</id>
        <name>2</name>
        <name>SI-SIIISIIAC</name>
        <sequence type="described" ref="VSP_002687"/>
    </isoform>
    <isoform>
        <id>Q14643-3</id>
        <name>3</name>
        <name>SISIII-SII</name>
        <sequence type="described" ref="VSP_002688 VSP_002689 VSP_002690"/>
    </isoform>
    <isoform>
        <id>Q14643-4</id>
        <name>4</name>
        <name>SI-SIII-SII</name>
        <sequence type="described" ref="VSP_002687 VSP_002688 VSP_002689 VSP_002690"/>
    </isoform>
    <isoform>
        <id>Q14643-5</id>
        <name>5</name>
        <name>SI-SIII-SIIAC</name>
        <sequence type="described" ref="VSP_002687 VSP_002688"/>
    </isoform>
    <isoform>
        <id>Q14643-6</id>
        <name>6</name>
        <name>SISIIISIIA</name>
        <sequence type="described" ref="VSP_002690"/>
    </isoform>
    <isoform>
        <id>Q14643-7</id>
        <name>7</name>
        <name>SI-SIII-SIIA</name>
        <sequence type="described" ref="VSP_002687 VSP_002690"/>
    </isoform>
    <isoform>
        <id>Q14643-8</id>
        <name>8</name>
        <name>SI-SIII-SIIA</name>
        <sequence type="described" ref="VSP_002687 VSP_002688 VSP_002690"/>
    </isoform>
    <text>There is a combination of three alternatively spliced domains at site SI, SIII and site SII (A and C). Experimental confirmation may be lacking for some isoforms.</text>
</comment>
<comment type="tissue specificity">
    <text evidence="26">Widely expressed.</text>
</comment>
<comment type="domain">
    <text evidence="2">The ITPR1 structure has a large solenoid CY assembly built around the central helical bundle made of the C-terminal domains from four ITPR1 subunits. The solenoid scaffold includes domains responsible for binding of ligands and regulatory proteins and is connected via an allosteric nexus at the cytosolic-membrane interface to the transmembrane channel assembly. Six transmembrane helices from each subunit form the central ion-conduction pore.</text>
</comment>
<comment type="PTM">
    <text evidence="2">Polyubiquitinated (By similarity). Polyubiquitination targets ITPR1 for proteasomal degradation (By similarity). Approximately 40% of the ITPR1-associated ubiquitin is monoubiquitin, and polyubiquitins are both 'Lys-48'- and 'Lys-63'-linked (By similarity).</text>
</comment>
<comment type="PTM">
    <text evidence="1 2">Phosphorylated by cAMP kinase (PKA) enhances calcium release (By similarity). Phosphorylation by PKA increases the interaction with inositol 1,4,5-trisphosphate and decreases the interaction with AHCYL1 (By similarity).</text>
</comment>
<comment type="PTM">
    <text evidence="27">Phosphorylated on tyrosine residues.</text>
</comment>
<comment type="PTM">
    <text evidence="1">Palmitoylated by ZDHHC6 in immune cells, leading to regulation of ITPR1 stability and function.</text>
</comment>
<comment type="disease" evidence="14 15">
    <disease id="DI-01078">
        <name>Spinocerebellar ataxia 15</name>
        <acronym>SCA15</acronym>
        <description>Spinocerebellar ataxia is a clinically and genetically heterogeneous group of cerebellar disorders. Patients show progressive incoordination of gait and often poor coordination of hands, speech and eye movements, due to degeneration of the cerebellum with variable involvement of the brainstem and spinal cord. SCA15 is an autosomal dominant cerebellar ataxia (ADCA). It is very slow progressing form with a wide range of onset, ranging from childhood to adult. Most patients remain ambulatory.</description>
        <dbReference type="MIM" id="606658"/>
    </disease>
    <text>The disease is caused by variants affecting the gene represented in this entry.</text>
</comment>
<comment type="disease" evidence="18 21">
    <disease id="DI-03660">
        <name>Spinocerebellar ataxia 29</name>
        <acronym>SCA29</acronym>
        <description>An autosomal dominant, congenital spinocerebellar ataxia characterized by early motor delay, hypotonia and mild cognitive delay. Affected individuals develop a very slowly progressive or non-progressive gait and limb ataxia associated with cerebellar atrophy on brain imaging. Additional variable features include nystagmus, dysarthria, and tremor.</description>
        <dbReference type="MIM" id="117360"/>
    </disease>
    <text>The disease is caused by variants affecting the gene represented in this entry.</text>
</comment>
<comment type="disease" evidence="22 23">
    <disease id="DI-01661">
        <name>Gillespie syndrome</name>
        <acronym>GLSP</acronym>
        <description>A rare disease characterized by bilateral iris hypoplasia, congenital hypotonia, non-progressive ataxia, progressive cerebellar atrophy, and intellectual disability.</description>
        <dbReference type="MIM" id="206700"/>
    </disease>
    <text>The disease is caused by variants affecting the gene represented in this entry.</text>
</comment>
<comment type="similarity">
    <text evidence="32">Belongs to the InsP3 receptor family.</text>
</comment>
<reference key="1">
    <citation type="journal article" date="1994" name="Biochem. J.">
        <title>Human inositol 1,4,5-trisphosphate type-1 receptor, InsP3R1: structure, function, regulation of expression and chromosomal localization.</title>
        <authorList>
            <person name="Yamada N."/>
            <person name="Makino Y."/>
            <person name="Clark R.A."/>
            <person name="Pearson D.W."/>
            <person name="Mattei M.-G."/>
            <person name="Guenet J.-L."/>
            <person name="Ohama E."/>
            <person name="Fujino I."/>
            <person name="Miyawaki A."/>
            <person name="Furuichi T."/>
            <person name="Mikoshiba K."/>
        </authorList>
    </citation>
    <scope>NUCLEOTIDE SEQUENCE [MRNA] (ISOFORM 4)</scope>
    <source>
        <tissue>Myeloid</tissue>
        <tissue>Uterus</tissue>
    </source>
</reference>
<reference key="2">
    <citation type="journal article" date="1995" name="J. Biol. Chem.">
        <title>The human type 1 inositol 1,4,5-trisphosphate receptor from T lymphocytes. Structure, localization, and tyrosine phosphorylation.</title>
        <authorList>
            <person name="Harnick D.J."/>
            <person name="Jayaraman T."/>
            <person name="Ma Y."/>
            <person name="Mulieri P."/>
            <person name="Go L.O."/>
            <person name="Marks A.R."/>
        </authorList>
    </citation>
    <scope>NUCLEOTIDE SEQUENCE [MRNA] (ISOFORM 3)</scope>
    <scope>SUBCELLULAR LOCATION</scope>
    <scope>PHOSPHORYLATION</scope>
    <source>
        <tissue>T-cell</tissue>
    </source>
</reference>
<reference key="3">
    <citation type="submission" date="2004-04" db="EMBL/GenBank/DDBJ databases">
        <authorList>
            <person name="Marks A."/>
        </authorList>
    </citation>
    <scope>SEQUENCE REVISION TO 431; 1012-1017; 1460; 1823; 2324; 2330; 2334; 2337; 2346; 2358; 2361; 2372; 2396; 2418; 2426; 2434 AND 2741</scope>
</reference>
<reference key="4">
    <citation type="journal article" date="1995" name="Brain Res. Mol. Brain Res.">
        <title>Molecular cloning of a cDNA for the human inositol 1,4,5-trisphosphate receptor type 1, and the identification of a third alternatively spliced variant.</title>
        <authorList>
            <person name="Nucifora F.C. Jr."/>
            <person name="Li S.-H."/>
            <person name="Danoff S."/>
            <person name="Ullrich A."/>
            <person name="Ross C.A."/>
        </authorList>
    </citation>
    <scope>NUCLEOTIDE SEQUENCE [MRNA] (ISOFORM 2)</scope>
    <scope>TISSUE SPECIFICITY</scope>
    <scope>ALTERNATIVE SPLICING</scope>
    <source>
        <tissue>Brain</tissue>
    </source>
</reference>
<reference key="5">
    <citation type="journal article" date="2006" name="Nature">
        <title>The DNA sequence, annotation and analysis of human chromosome 3.</title>
        <authorList>
            <person name="Muzny D.M."/>
            <person name="Scherer S.E."/>
            <person name="Kaul R."/>
            <person name="Wang J."/>
            <person name="Yu J."/>
            <person name="Sudbrak R."/>
            <person name="Buhay C.J."/>
            <person name="Chen R."/>
            <person name="Cree A."/>
            <person name="Ding Y."/>
            <person name="Dugan-Rocha S."/>
            <person name="Gill R."/>
            <person name="Gunaratne P."/>
            <person name="Harris R.A."/>
            <person name="Hawes A.C."/>
            <person name="Hernandez J."/>
            <person name="Hodgson A.V."/>
            <person name="Hume J."/>
            <person name="Jackson A."/>
            <person name="Khan Z.M."/>
            <person name="Kovar-Smith C."/>
            <person name="Lewis L.R."/>
            <person name="Lozado R.J."/>
            <person name="Metzker M.L."/>
            <person name="Milosavljevic A."/>
            <person name="Miner G.R."/>
            <person name="Morgan M.B."/>
            <person name="Nazareth L.V."/>
            <person name="Scott G."/>
            <person name="Sodergren E."/>
            <person name="Song X.-Z."/>
            <person name="Steffen D."/>
            <person name="Wei S."/>
            <person name="Wheeler D.A."/>
            <person name="Wright M.W."/>
            <person name="Worley K.C."/>
            <person name="Yuan Y."/>
            <person name="Zhang Z."/>
            <person name="Adams C.Q."/>
            <person name="Ansari-Lari M.A."/>
            <person name="Ayele M."/>
            <person name="Brown M.J."/>
            <person name="Chen G."/>
            <person name="Chen Z."/>
            <person name="Clendenning J."/>
            <person name="Clerc-Blankenburg K.P."/>
            <person name="Chen R."/>
            <person name="Chen Z."/>
            <person name="Davis C."/>
            <person name="Delgado O."/>
            <person name="Dinh H.H."/>
            <person name="Dong W."/>
            <person name="Draper H."/>
            <person name="Ernst S."/>
            <person name="Fu G."/>
            <person name="Gonzalez-Garay M.L."/>
            <person name="Garcia D.K."/>
            <person name="Gillett W."/>
            <person name="Gu J."/>
            <person name="Hao B."/>
            <person name="Haugen E."/>
            <person name="Havlak P."/>
            <person name="He X."/>
            <person name="Hennig S."/>
            <person name="Hu S."/>
            <person name="Huang W."/>
            <person name="Jackson L.R."/>
            <person name="Jacob L.S."/>
            <person name="Kelly S.H."/>
            <person name="Kube M."/>
            <person name="Levy R."/>
            <person name="Li Z."/>
            <person name="Liu B."/>
            <person name="Liu J."/>
            <person name="Liu W."/>
            <person name="Lu J."/>
            <person name="Maheshwari M."/>
            <person name="Nguyen B.-V."/>
            <person name="Okwuonu G.O."/>
            <person name="Palmeiri A."/>
            <person name="Pasternak S."/>
            <person name="Perez L.M."/>
            <person name="Phelps K.A."/>
            <person name="Plopper F.J."/>
            <person name="Qiang B."/>
            <person name="Raymond C."/>
            <person name="Rodriguez R."/>
            <person name="Saenphimmachak C."/>
            <person name="Santibanez J."/>
            <person name="Shen H."/>
            <person name="Shen Y."/>
            <person name="Subramanian S."/>
            <person name="Tabor P.E."/>
            <person name="Verduzco D."/>
            <person name="Waldron L."/>
            <person name="Wang J."/>
            <person name="Wang J."/>
            <person name="Wang Q."/>
            <person name="Williams G.A."/>
            <person name="Wong G.K.-S."/>
            <person name="Yao Z."/>
            <person name="Zhang J."/>
            <person name="Zhang X."/>
            <person name="Zhao G."/>
            <person name="Zhou J."/>
            <person name="Zhou Y."/>
            <person name="Nelson D."/>
            <person name="Lehrach H."/>
            <person name="Reinhardt R."/>
            <person name="Naylor S.L."/>
            <person name="Yang H."/>
            <person name="Olson M."/>
            <person name="Weinstock G."/>
            <person name="Gibbs R.A."/>
        </authorList>
    </citation>
    <scope>NUCLEOTIDE SEQUENCE [LARGE SCALE GENOMIC DNA]</scope>
</reference>
<reference key="6">
    <citation type="journal article" date="1996" name="Int. J. Radiat. Biol.">
        <title>Induction of inositol 1,4,5 trisphosphate receptor genes by ionizing radiation.</title>
        <authorList>
            <person name="Yan J."/>
            <person name="Khanna K.K."/>
            <person name="Lavin M.F."/>
        </authorList>
    </citation>
    <scope>NUCLEOTIDE SEQUENCE [MRNA] OF 1548-1723 (ISOFORMS 3 AND 4)</scope>
</reference>
<reference key="7">
    <citation type="journal article" date="2000" name="Biochem. J.">
        <title>Ca2+-calmodulin inhibits Ca2+ release mediated by type-1, -2 and -3 inositol trisphosphate receptors.</title>
        <authorList>
            <person name="Adkins C.E."/>
            <person name="Morris S.A."/>
            <person name="De Smedt H."/>
            <person name="Sienaert I."/>
            <person name="Toeroek K."/>
            <person name="Taylor C.W."/>
        </authorList>
    </citation>
    <scope>FUNCTION</scope>
    <scope>TRANSPORTER ACTIVITY</scope>
    <scope>ACTIVITY REGULATION</scope>
</reference>
<reference key="8">
    <citation type="journal article" date="2002" name="Proc. Natl. Acad. Sci. U.S.A.">
        <title>Identification of a family of calcium sensors as protein ligands of inositol trisphosphate receptor Ca(2+) release channels.</title>
        <authorList>
            <person name="Yang J."/>
            <person name="McBride S."/>
            <person name="Mak D.-O.D."/>
            <person name="Vardi N."/>
            <person name="Palczewski K."/>
            <person name="Haeseleer F."/>
            <person name="Foskett J.K."/>
        </authorList>
    </citation>
    <scope>INTERACTION WITH CABP1</scope>
</reference>
<reference key="9">
    <citation type="journal article" date="2004" name="EMBO J.">
        <title>Regulation of InsP3 receptor activity by neuronal Ca2+-binding proteins.</title>
        <authorList>
            <person name="Kasri N.N."/>
            <person name="Holmes A.M."/>
            <person name="Bultynck G."/>
            <person name="Parys J.B."/>
            <person name="Bootman M.D."/>
            <person name="Rietdorf K."/>
            <person name="Missiaen L."/>
            <person name="McDonald F."/>
            <person name="De Smedt H."/>
            <person name="Conway S.J."/>
            <person name="Holmes A.B."/>
            <person name="Berridge M.J."/>
            <person name="Roderick H.L."/>
        </authorList>
    </citation>
    <scope>INTERACTION WITH CABP1</scope>
</reference>
<reference key="10">
    <citation type="journal article" date="2005" name="Cell">
        <title>Subtype-specific and ER lumenal environment-dependent regulation of inositol 1,4,5-trisphosphate receptor type 1 by ERp44.</title>
        <authorList>
            <person name="Higo T."/>
            <person name="Hattori M."/>
            <person name="Nakamura T."/>
            <person name="Natsume T."/>
            <person name="Michikawa T."/>
            <person name="Mikoshiba K."/>
        </authorList>
    </citation>
    <scope>INTERACTION WITH ERP44</scope>
</reference>
<reference key="11">
    <citation type="journal article" date="2006" name="Cell">
        <title>Global, in vivo, and site-specific phosphorylation dynamics in signaling networks.</title>
        <authorList>
            <person name="Olsen J.V."/>
            <person name="Blagoev B."/>
            <person name="Gnad F."/>
            <person name="Macek B."/>
            <person name="Kumar C."/>
            <person name="Mortensen P."/>
            <person name="Mann M."/>
        </authorList>
    </citation>
    <scope>PHOSPHORYLATION [LARGE SCALE ANALYSIS] AT SER-1598</scope>
    <scope>IDENTIFICATION BY MASS SPECTROMETRY [LARGE SCALE ANALYSIS]</scope>
    <source>
        <tissue>Cervix carcinoma</tissue>
    </source>
</reference>
<reference key="12">
    <citation type="journal article" date="2006" name="Mol. Cell">
        <title>IRBIT suppresses IP3 receptor activity by competing with IP3 for the common binding site on the IP3 receptor.</title>
        <authorList>
            <person name="Ando H."/>
            <person name="Mizutani A."/>
            <person name="Kiefer H."/>
            <person name="Tsuzurugi D."/>
            <person name="Michikawa T."/>
            <person name="Mikoshiba K."/>
        </authorList>
    </citation>
    <scope>INTERACTION WITH AHCYL1</scope>
    <scope>MUTAGENESIS OF ARG-241; LYS-249; ARG-265; THR-267; ARG-269; ARG-504; ARG-506; LYS-508; ARG-511; TYR-567; ARG-568 AND LYS-569</scope>
</reference>
<reference key="13">
    <citation type="journal article" date="2007" name="Blood">
        <title>IRAG mediates NO/cGMP-dependent inhibition of platelet aggregation and thrombus formation.</title>
        <authorList>
            <person name="Antl M."/>
            <person name="von Bruehl M.-L."/>
            <person name="Eiglsperger C."/>
            <person name="Werner M."/>
            <person name="Konrad I."/>
            <person name="Kocher T."/>
            <person name="Wilm M."/>
            <person name="Hofmann F."/>
            <person name="Massberg S."/>
            <person name="Schlossmann J."/>
        </authorList>
    </citation>
    <scope>INTERACTION WITH IRAG1</scope>
</reference>
<reference key="14">
    <citation type="journal article" date="2007" name="PLoS Genet.">
        <title>Deletion at ITPR1 underlies ataxia in mice and spinocerebellar ataxia 15 in humans.</title>
        <authorList>
            <person name="van de Leemput J."/>
            <person name="Chandran J."/>
            <person name="Knight M.A."/>
            <person name="Holtzclaw L.A."/>
            <person name="Scholz S."/>
            <person name="Cookson M.R."/>
            <person name="Houlden H."/>
            <person name="Gwinn-Hardy K."/>
            <person name="Fung H.-C."/>
            <person name="Lin X."/>
            <person name="Hernandez D."/>
            <person name="Simon-Sanchez J."/>
            <person name="Wood N.W."/>
            <person name="Giunti P."/>
            <person name="Rafferty I."/>
            <person name="Hardy J."/>
            <person name="Storey E."/>
            <person name="Gardner R.J.M."/>
            <person name="Forrest S.M."/>
            <person name="Fisher E.M.C."/>
            <person name="Russell J.T."/>
            <person name="Cai H."/>
            <person name="Singleton A.B."/>
        </authorList>
    </citation>
    <scope>INVOLVEMENT IN SCA15</scope>
</reference>
<reference key="15">
    <citation type="journal article" date="2008" name="Proc. Natl. Acad. Sci. U.S.A.">
        <title>A quantitative atlas of mitotic phosphorylation.</title>
        <authorList>
            <person name="Dephoure N."/>
            <person name="Zhou C."/>
            <person name="Villen J."/>
            <person name="Beausoleil S.A."/>
            <person name="Bakalarski C.E."/>
            <person name="Elledge S.J."/>
            <person name="Gygi S.P."/>
        </authorList>
    </citation>
    <scope>PHOSPHORYLATION [LARGE SCALE ANALYSIS] AT SER-1598 AND SER-1764</scope>
    <scope>IDENTIFICATION BY MASS SPECTROMETRY [LARGE SCALE ANALYSIS]</scope>
    <source>
        <tissue>Cervix carcinoma</tissue>
    </source>
</reference>
<reference key="16">
    <citation type="journal article" date="2009" name="J. Neurochem.">
        <title>An IRBIT homologue lacks binding activity to inositol 1,4,5-trisphosphate receptor due to the unique N-terminal appendage.</title>
        <authorList>
            <person name="Ando H."/>
            <person name="Mizutani A."/>
            <person name="Mikoshiba K."/>
        </authorList>
    </citation>
    <scope>INTERACTION WITH AHCYL1 AND AHCYL2</scope>
</reference>
<reference key="17">
    <citation type="journal article" date="2009" name="J. Proteome Res.">
        <title>Glycoproteomics analysis of human liver tissue by combination of multiple enzyme digestion and hydrazide chemistry.</title>
        <authorList>
            <person name="Chen R."/>
            <person name="Jiang X."/>
            <person name="Sun D."/>
            <person name="Han G."/>
            <person name="Wang F."/>
            <person name="Ye M."/>
            <person name="Wang L."/>
            <person name="Zou H."/>
        </authorList>
    </citation>
    <scope>GLYCOSYLATION [LARGE SCALE ANALYSIS] AT ASN-2512</scope>
    <source>
        <tissue>Liver</tissue>
    </source>
</reference>
<reference key="18">
    <citation type="journal article" date="2010" name="Sci. Signal.">
        <title>Quantitative phosphoproteomics reveals widespread full phosphorylation site occupancy during mitosis.</title>
        <authorList>
            <person name="Olsen J.V."/>
            <person name="Vermeulen M."/>
            <person name="Santamaria A."/>
            <person name="Kumar C."/>
            <person name="Miller M.L."/>
            <person name="Jensen L.J."/>
            <person name="Gnad F."/>
            <person name="Cox J."/>
            <person name="Jensen T.S."/>
            <person name="Nigg E.A."/>
            <person name="Brunak S."/>
            <person name="Mann M."/>
        </authorList>
    </citation>
    <scope>PHOSPHORYLATION [LARGE SCALE ANALYSIS] AT SER-1598</scope>
    <scope>IDENTIFICATION BY MASS SPECTROMETRY [LARGE SCALE ANALYSIS]</scope>
    <source>
        <tissue>Cervix carcinoma</tissue>
    </source>
</reference>
<reference key="19">
    <citation type="journal article" date="2012" name="FEBS Open Bio">
        <title>Tespa1 is a novel inositol 1,4,5-trisphosphate receptor binding protein in T and B lymphocytes.</title>
        <authorList>
            <person name="Matsuzaki H."/>
            <person name="Fujimoto T."/>
            <person name="Ota T."/>
            <person name="Ogawa M."/>
            <person name="Tsunoda T."/>
            <person name="Doi K."/>
            <person name="Hamabashiri M."/>
            <person name="Tanaka M."/>
            <person name="Shirasawa S."/>
        </authorList>
    </citation>
    <scope>INTERACTION WITH TESPA1</scope>
</reference>
<reference key="20">
    <citation type="journal article" date="2013" name="J. Biol. Chem.">
        <title>The Bcl-2 protein family member Bok binds to the coupling domain of inositol 1,4,5-trisphosphate receptors and protects them from proteolytic cleavage.</title>
        <authorList>
            <person name="Schulman J.J."/>
            <person name="Wright F.A."/>
            <person name="Kaufmann T."/>
            <person name="Wojcikiewicz R.J."/>
        </authorList>
    </citation>
    <scope>INTERACTION WITH BOK</scope>
</reference>
<reference key="21">
    <citation type="journal article" date="2013" name="J. Proteome Res.">
        <title>Toward a comprehensive characterization of a human cancer cell phosphoproteome.</title>
        <authorList>
            <person name="Zhou H."/>
            <person name="Di Palma S."/>
            <person name="Preisinger C."/>
            <person name="Peng M."/>
            <person name="Polat A.N."/>
            <person name="Heck A.J."/>
            <person name="Mohammed S."/>
        </authorList>
    </citation>
    <scope>PHOSPHORYLATION [LARGE SCALE ANALYSIS] AT SER-1598 AND SER-1764</scope>
    <scope>IDENTIFICATION BY MASS SPECTROMETRY [LARGE SCALE ANALYSIS]</scope>
    <source>
        <tissue>Cervix carcinoma</tissue>
    </source>
</reference>
<reference key="22">
    <citation type="journal article" date="2014" name="J. Proteomics">
        <title>An enzyme assisted RP-RPLC approach for in-depth analysis of human liver phosphoproteome.</title>
        <authorList>
            <person name="Bian Y."/>
            <person name="Song C."/>
            <person name="Cheng K."/>
            <person name="Dong M."/>
            <person name="Wang F."/>
            <person name="Huang J."/>
            <person name="Sun D."/>
            <person name="Wang L."/>
            <person name="Ye M."/>
            <person name="Zou H."/>
        </authorList>
    </citation>
    <scope>PHOSPHORYLATION [LARGE SCALE ANALYSIS] AT SER-1598</scope>
    <scope>IDENTIFICATION BY MASS SPECTROMETRY [LARGE SCALE ANALYSIS]</scope>
    <source>
        <tissue>Liver</tissue>
    </source>
</reference>
<reference key="23">
    <citation type="journal article" date="2016" name="Elife">
        <title>IRBIT controls apoptosis by interacting with the Bcl-2 homolog, Bcl2l10, and by promoting ER-mitochondria contact.</title>
        <authorList>
            <person name="Bonneau B."/>
            <person name="Ando H."/>
            <person name="Kawaai K."/>
            <person name="Hirose M."/>
            <person name="Takahashi-Iwanaga H."/>
            <person name="Mikoshiba K."/>
        </authorList>
    </citation>
    <scope>INTERACTION WITH AHCYL1 AND BCL2L10</scope>
</reference>
<reference key="24">
    <citation type="journal article" date="2008" name="Neurology">
        <title>Total deletion and a missense mutation of ITPR1 in Japanese SCA15 families.</title>
        <authorList>
            <person name="Hara K."/>
            <person name="Shiga A."/>
            <person name="Nozaki H."/>
            <person name="Mitsui J."/>
            <person name="Takahashi Y."/>
            <person name="Ishiguro H."/>
            <person name="Yomono H."/>
            <person name="Kurisaki H."/>
            <person name="Goto J."/>
            <person name="Ikeuchi T."/>
            <person name="Tsuji S."/>
            <person name="Nishizawa M."/>
            <person name="Onodera O."/>
        </authorList>
    </citation>
    <scope>VARIANT SCA15 LEU-1083</scope>
</reference>
<reference key="25">
    <citation type="journal article" date="2012" name="Orphanet J. Rare Dis.">
        <title>Missense mutations in ITPR1 cause autosomal dominant congenital nonprogressive spinocerebellar ataxia.</title>
        <authorList>
            <person name="Huang L."/>
            <person name="Chardon J.W."/>
            <person name="Carter M.T."/>
            <person name="Friend K.L."/>
            <person name="Dudding T.E."/>
            <person name="Schwartzentruber J."/>
            <person name="Zou R."/>
            <person name="Schofield P.W."/>
            <person name="Douglas S."/>
            <person name="Bulman D.E."/>
            <person name="Boycott K.M."/>
        </authorList>
    </citation>
    <scope>VARIANTS SCA29 ASP-602 AND MET-1562</scope>
</reference>
<reference key="26">
    <citation type="journal article" date="2016" name="Cerebellum Ataxias">
        <title>ITPR1 gene p.Val1553Met mutation in Russian family with mild Spinocerebellar ataxia.</title>
        <authorList>
            <person name="Shadrina M.I."/>
            <person name="Shulskaya M.V."/>
            <person name="Klyushnikov S.A."/>
            <person name="Nikopensius T."/>
            <person name="Nelis M."/>
            <person name="Kivistik P.A."/>
            <person name="Komar A.A."/>
            <person name="Limborska S.A."/>
            <person name="Illarioshkin S.N."/>
            <person name="Slominsky P.A."/>
        </authorList>
    </citation>
    <scope>VARIANT SCA29 MET-1562</scope>
</reference>
<reference key="27">
    <citation type="journal article" date="2016" name="Am. J. Hum. Genet.">
        <title>Recessive and dominant de novo ITPR1 mutations cause Gillespie syndrome.</title>
        <authorList>
            <person name="Gerber S."/>
            <person name="Alzayady K.J."/>
            <person name="Burglen L."/>
            <person name="Bremond-Gignac D."/>
            <person name="Marchesin V."/>
            <person name="Roche O."/>
            <person name="Rio M."/>
            <person name="Funalot B."/>
            <person name="Calmon R."/>
            <person name="Durr A."/>
            <person name="Gil-da-Silva-Lopes V.L."/>
            <person name="Ribeiro Bittar M.F."/>
            <person name="Orssaud C."/>
            <person name="Heron B."/>
            <person name="Ayoub E."/>
            <person name="Berquin P."/>
            <person name="Bahi-Buisson N."/>
            <person name="Bole C."/>
            <person name="Masson C."/>
            <person name="Munnich A."/>
            <person name="Simons M."/>
            <person name="Delous M."/>
            <person name="Dollfus H."/>
            <person name="Boddaert N."/>
            <person name="Lyonnet S."/>
            <person name="Kaplan J."/>
            <person name="Calvas P."/>
            <person name="Yule D.I."/>
            <person name="Rozet J.M."/>
            <person name="Fares Taie L."/>
        </authorList>
    </citation>
    <scope>INVOLVEMENT IN GLSP</scope>
    <scope>VARIANTS GLSP LEU-2601 AND LYS-2611 DEL</scope>
    <scope>CHARACTERIZATION OF VARIANT GLSP LYS-2611 DEL</scope>
    <scope>FUNCTION</scope>
    <scope>TRANSPORTER ACTIVITY</scope>
    <scope>SUBUNIT</scope>
</reference>
<reference key="28">
    <citation type="journal article" date="2016" name="Am. J. Hum. Genet.">
        <title>A restricted repertoire of de novo mutations in ITPR1 cause Gillespie syndrome with evidence for dominant-negative effect.</title>
        <authorList>
            <consortium name="DDD Study"/>
            <person name="McEntagart M."/>
            <person name="Williamson K.A."/>
            <person name="Rainger J.K."/>
            <person name="Wheeler A."/>
            <person name="Seawright A."/>
            <person name="De Baere E."/>
            <person name="Verdin H."/>
            <person name="Bergendahl L.T."/>
            <person name="Quigley A."/>
            <person name="Rainger J."/>
            <person name="Dixit A."/>
            <person name="Sarkar A."/>
            <person name="Lopez Laso E."/>
            <person name="Sanchez-Carpintero R."/>
            <person name="Barrio J."/>
            <person name="Bitoun P."/>
            <person name="Prescott T."/>
            <person name="Riise R."/>
            <person name="McKee S."/>
            <person name="Cook J."/>
            <person name="McKie L."/>
            <person name="Ceulemans B."/>
            <person name="Meire F."/>
            <person name="Temple I.K."/>
            <person name="Prieur F."/>
            <person name="Williams J."/>
            <person name="Clouston P."/>
            <person name="Nemeth A.H."/>
            <person name="Banka S."/>
            <person name="Bengani H."/>
            <person name="Handley M."/>
            <person name="Freyer E."/>
            <person name="Ross A."/>
            <person name="van Heyningen V."/>
            <person name="Marsh J.A."/>
            <person name="Elmslie F."/>
            <person name="FitzPatrick D.R."/>
        </authorList>
    </citation>
    <scope>INVOLVEMENT IN GLSP</scope>
    <scope>VARIANTS GLSP GLN-2109; ARG-2554 AND LYS-2611 DEL</scope>
    <scope>SUBCELLULAR LOCATION</scope>
</reference>
<reference key="29">
    <citation type="journal article" date="2018" name="Cell">
        <title>Mutations in disordered regions can cause disease by creating dileucine motifs.</title>
        <authorList>
            <person name="Meyer K."/>
            <person name="Kirchner M."/>
            <person name="Uyar B."/>
            <person name="Cheng J.Y."/>
            <person name="Russo G."/>
            <person name="Hernandez-Miranda L.R."/>
            <person name="Szymborska A."/>
            <person name="Zauber H."/>
            <person name="Rudolph I.M."/>
            <person name="Willnow T.E."/>
            <person name="Akalin A."/>
            <person name="Haucke V."/>
            <person name="Gerhardt H."/>
            <person name="Birchmeier C."/>
            <person name="Kuehn R."/>
            <person name="Krauss M."/>
            <person name="Diecke S."/>
            <person name="Pascual J.M."/>
            <person name="Selbach M."/>
        </authorList>
    </citation>
    <scope>MUTAGENESIS OF PRO-1059</scope>
</reference>
<dbReference type="EMBL" id="D26070">
    <property type="protein sequence ID" value="BAA05065.1"/>
    <property type="molecule type" value="mRNA"/>
</dbReference>
<dbReference type="EMBL" id="L38019">
    <property type="protein sequence ID" value="AAB04947.2"/>
    <property type="molecule type" value="mRNA"/>
</dbReference>
<dbReference type="EMBL" id="U23850">
    <property type="status" value="NOT_ANNOTATED_CDS"/>
    <property type="molecule type" value="mRNA"/>
</dbReference>
<dbReference type="EMBL" id="AC018816">
    <property type="status" value="NOT_ANNOTATED_CDS"/>
    <property type="molecule type" value="Genomic_DNA"/>
</dbReference>
<dbReference type="EMBL" id="AC024168">
    <property type="status" value="NOT_ANNOTATED_CDS"/>
    <property type="molecule type" value="Genomic_DNA"/>
</dbReference>
<dbReference type="EMBL" id="AC069248">
    <property type="status" value="NOT_ANNOTATED_CDS"/>
    <property type="molecule type" value="Genomic_DNA"/>
</dbReference>
<dbReference type="EMBL" id="AC090944">
    <property type="status" value="NOT_ANNOTATED_CDS"/>
    <property type="molecule type" value="Genomic_DNA"/>
</dbReference>
<dbReference type="EMBL" id="S82269">
    <property type="protein sequence ID" value="AAD14386.1"/>
    <property type="molecule type" value="mRNA"/>
</dbReference>
<dbReference type="CCDS" id="CCDS46740.2">
    <molecule id="Q14643-3"/>
</dbReference>
<dbReference type="CCDS" id="CCDS54550.1">
    <molecule id="Q14643-4"/>
</dbReference>
<dbReference type="CCDS" id="CCDS54551.1">
    <molecule id="Q14643-2"/>
</dbReference>
<dbReference type="CCDS" id="CCDS93191.1">
    <molecule id="Q14643-1"/>
</dbReference>
<dbReference type="PIR" id="A55713">
    <property type="entry name" value="A55713"/>
</dbReference>
<dbReference type="PIR" id="S54974">
    <property type="entry name" value="S54974"/>
</dbReference>
<dbReference type="RefSeq" id="NP_001093422.2">
    <molecule id="Q14643-3"/>
    <property type="nucleotide sequence ID" value="NM_001099952.4"/>
</dbReference>
<dbReference type="RefSeq" id="NP_001161744.1">
    <molecule id="Q14643-2"/>
    <property type="nucleotide sequence ID" value="NM_001168272.2"/>
</dbReference>
<dbReference type="RefSeq" id="NP_001365381.1">
    <molecule id="Q14643-1"/>
    <property type="nucleotide sequence ID" value="NM_001378452.1"/>
</dbReference>
<dbReference type="RefSeq" id="NP_002213.5">
    <molecule id="Q14643-4"/>
    <property type="nucleotide sequence ID" value="NM_002222.7"/>
</dbReference>
<dbReference type="RefSeq" id="XP_011531985.1">
    <property type="nucleotide sequence ID" value="XM_011533683.2"/>
</dbReference>
<dbReference type="EMDB" id="EMD-20850"/>
<dbReference type="SMR" id="Q14643"/>
<dbReference type="BioGRID" id="109913">
    <property type="interactions" value="134"/>
</dbReference>
<dbReference type="CORUM" id="Q14643"/>
<dbReference type="DIP" id="DIP-29714N"/>
<dbReference type="ELM" id="Q14643"/>
<dbReference type="FunCoup" id="Q14643">
    <property type="interactions" value="3019"/>
</dbReference>
<dbReference type="IntAct" id="Q14643">
    <property type="interactions" value="57"/>
</dbReference>
<dbReference type="MINT" id="Q14643"/>
<dbReference type="STRING" id="9606.ENSP00000306253"/>
<dbReference type="BindingDB" id="Q14643"/>
<dbReference type="ChEMBL" id="CHEMBL4046"/>
<dbReference type="DrugBank" id="DB03401">
    <property type="generic name" value="1D-myo-inositol 1,4,5-trisphosphate"/>
</dbReference>
<dbReference type="DrugBank" id="DB00201">
    <property type="generic name" value="Caffeine"/>
</dbReference>
<dbReference type="DrugBank" id="DB09462">
    <property type="generic name" value="Glycerin"/>
</dbReference>
<dbReference type="DrugBank" id="DB11590">
    <property type="generic name" value="Thimerosal"/>
</dbReference>
<dbReference type="TCDB" id="1.A.3.2.6">
    <property type="family name" value="the ryanodine-inositol 1,4,5-triphosphate receptor ca(2+) channel (rir-cac) family"/>
</dbReference>
<dbReference type="GlyConnect" id="1399">
    <property type="glycosylation" value="1 N-Linked glycan (1 site)"/>
</dbReference>
<dbReference type="GlyCosmos" id="Q14643">
    <property type="glycosylation" value="1 site, 1 glycan"/>
</dbReference>
<dbReference type="GlyGen" id="Q14643">
    <property type="glycosylation" value="7 sites, 12 N-linked glycans (5 sites), 1 O-linked glycan (2 sites)"/>
</dbReference>
<dbReference type="iPTMnet" id="Q14643"/>
<dbReference type="PhosphoSitePlus" id="Q14643"/>
<dbReference type="SwissPalm" id="Q14643"/>
<dbReference type="BioMuta" id="ITPR1"/>
<dbReference type="DMDM" id="519668682"/>
<dbReference type="jPOST" id="Q14643"/>
<dbReference type="MassIVE" id="Q14643"/>
<dbReference type="PaxDb" id="9606-ENSP00000306253"/>
<dbReference type="PeptideAtlas" id="Q14643"/>
<dbReference type="ProteomicsDB" id="17461"/>
<dbReference type="ProteomicsDB" id="60081">
    <molecule id="Q14643-1"/>
</dbReference>
<dbReference type="ProteomicsDB" id="60082">
    <molecule id="Q14643-2"/>
</dbReference>
<dbReference type="ProteomicsDB" id="60083">
    <molecule id="Q14643-3"/>
</dbReference>
<dbReference type="ProteomicsDB" id="60084">
    <molecule id="Q14643-4"/>
</dbReference>
<dbReference type="ProteomicsDB" id="60085">
    <molecule id="Q14643-5"/>
</dbReference>
<dbReference type="ProteomicsDB" id="60086">
    <molecule id="Q14643-6"/>
</dbReference>
<dbReference type="ProteomicsDB" id="60087">
    <molecule id="Q14643-7"/>
</dbReference>
<dbReference type="ProteomicsDB" id="60088">
    <molecule id="Q14643-8"/>
</dbReference>
<dbReference type="Pumba" id="Q14643"/>
<dbReference type="ABCD" id="Q14643">
    <property type="antibodies" value="1 sequenced antibody"/>
</dbReference>
<dbReference type="Antibodypedia" id="5503">
    <property type="antibodies" value="423 antibodies from 41 providers"/>
</dbReference>
<dbReference type="DNASU" id="3708"/>
<dbReference type="Ensembl" id="ENST00000357086.10">
    <molecule id="Q14643-3"/>
    <property type="protein sequence ID" value="ENSP00000349597.4"/>
    <property type="gene ID" value="ENSG00000150995.21"/>
</dbReference>
<dbReference type="Ensembl" id="ENST00000443694.5">
    <molecule id="Q14643-2"/>
    <property type="protein sequence ID" value="ENSP00000401671.2"/>
    <property type="gene ID" value="ENSG00000150995.21"/>
</dbReference>
<dbReference type="Ensembl" id="ENST00000456211.8">
    <molecule id="Q14643-4"/>
    <property type="protein sequence ID" value="ENSP00000397885.2"/>
    <property type="gene ID" value="ENSG00000150995.21"/>
</dbReference>
<dbReference type="Ensembl" id="ENST00000648309.1">
    <molecule id="Q14643-5"/>
    <property type="protein sequence ID" value="ENSP00000497026.1"/>
    <property type="gene ID" value="ENSG00000150995.21"/>
</dbReference>
<dbReference type="Ensembl" id="ENST00000649015.2">
    <molecule id="Q14643-1"/>
    <property type="protein sequence ID" value="ENSP00000497605.1"/>
    <property type="gene ID" value="ENSG00000150995.21"/>
</dbReference>
<dbReference type="GeneID" id="3708"/>
<dbReference type="KEGG" id="hsa:3708"/>
<dbReference type="MANE-Select" id="ENST00000649015.2">
    <property type="protein sequence ID" value="ENSP00000497605.1"/>
    <property type="RefSeq nucleotide sequence ID" value="NM_001378452.1"/>
    <property type="RefSeq protein sequence ID" value="NP_001365381.1"/>
</dbReference>
<dbReference type="UCSC" id="uc003bqc.3">
    <molecule id="Q14643-1"/>
    <property type="organism name" value="human"/>
</dbReference>
<dbReference type="AGR" id="HGNC:6180"/>
<dbReference type="CTD" id="3708"/>
<dbReference type="DisGeNET" id="3708"/>
<dbReference type="GeneCards" id="ITPR1"/>
<dbReference type="HGNC" id="HGNC:6180">
    <property type="gene designation" value="ITPR1"/>
</dbReference>
<dbReference type="HPA" id="ENSG00000150995">
    <property type="expression patterns" value="Low tissue specificity"/>
</dbReference>
<dbReference type="MalaCards" id="ITPR1"/>
<dbReference type="MIM" id="117360">
    <property type="type" value="phenotype"/>
</dbReference>
<dbReference type="MIM" id="147265">
    <property type="type" value="gene"/>
</dbReference>
<dbReference type="MIM" id="206700">
    <property type="type" value="phenotype"/>
</dbReference>
<dbReference type="MIM" id="606658">
    <property type="type" value="phenotype"/>
</dbReference>
<dbReference type="neXtProt" id="NX_Q14643"/>
<dbReference type="OpenTargets" id="ENSG00000150995"/>
<dbReference type="Orphanet" id="1065">
    <property type="disease" value="Aniridia-cerebellar ataxia-intellectual disability syndrome"/>
</dbReference>
<dbReference type="Orphanet" id="98769">
    <property type="disease" value="Spinocerebellar ataxia type 15/16"/>
</dbReference>
<dbReference type="Orphanet" id="208513">
    <property type="disease" value="Spinocerebellar ataxia type 29"/>
</dbReference>
<dbReference type="PharmGKB" id="PA29978"/>
<dbReference type="VEuPathDB" id="HostDB:ENSG00000150995"/>
<dbReference type="eggNOG" id="KOG3533">
    <property type="taxonomic scope" value="Eukaryota"/>
</dbReference>
<dbReference type="GeneTree" id="ENSGT00940000155071"/>
<dbReference type="HOGENOM" id="CLU_000206_1_0_1"/>
<dbReference type="InParanoid" id="Q14643"/>
<dbReference type="OMA" id="GSWLYIM"/>
<dbReference type="OrthoDB" id="76898at2759"/>
<dbReference type="PAN-GO" id="Q14643">
    <property type="GO annotations" value="9 GO annotations based on evolutionary models"/>
</dbReference>
<dbReference type="PhylomeDB" id="Q14643"/>
<dbReference type="TreeFam" id="TF312815"/>
<dbReference type="PathwayCommons" id="Q14643"/>
<dbReference type="Reactome" id="R-HSA-112043">
    <property type="pathway name" value="PLC beta mediated events"/>
</dbReference>
<dbReference type="Reactome" id="R-HSA-114508">
    <property type="pathway name" value="Effects of PIP2 hydrolysis"/>
</dbReference>
<dbReference type="Reactome" id="R-HSA-139853">
    <property type="pathway name" value="Elevation of cytosolic Ca2+ levels"/>
</dbReference>
<dbReference type="Reactome" id="R-HSA-1489509">
    <property type="pathway name" value="DAG and IP3 signaling"/>
</dbReference>
<dbReference type="Reactome" id="R-HSA-2029485">
    <property type="pathway name" value="Role of phospholipids in phagocytosis"/>
</dbReference>
<dbReference type="Reactome" id="R-HSA-2871809">
    <property type="pathway name" value="FCERI mediated Ca+2 mobilization"/>
</dbReference>
<dbReference type="Reactome" id="R-HSA-381676">
    <property type="pathway name" value="Glucagon-like Peptide-1 (GLP1) regulates insulin secretion"/>
</dbReference>
<dbReference type="Reactome" id="R-HSA-4086398">
    <property type="pathway name" value="Ca2+ pathway"/>
</dbReference>
<dbReference type="Reactome" id="R-HSA-418457">
    <property type="pathway name" value="cGMP effects"/>
</dbReference>
<dbReference type="Reactome" id="R-HSA-422356">
    <property type="pathway name" value="Regulation of insulin secretion"/>
</dbReference>
<dbReference type="Reactome" id="R-HSA-5218921">
    <property type="pathway name" value="VEGFR2 mediated cell proliferation"/>
</dbReference>
<dbReference type="Reactome" id="R-HSA-5578775">
    <property type="pathway name" value="Ion homeostasis"/>
</dbReference>
<dbReference type="Reactome" id="R-HSA-5607763">
    <property type="pathway name" value="CLEC7A (Dectin-1) induces NFAT activation"/>
</dbReference>
<dbReference type="Reactome" id="R-HSA-9664323">
    <property type="pathway name" value="FCGR3A-mediated IL10 synthesis"/>
</dbReference>
<dbReference type="Reactome" id="R-HSA-983695">
    <property type="pathway name" value="Antigen activates B Cell Receptor (BCR) leading to generation of second messengers"/>
</dbReference>
<dbReference type="SignaLink" id="Q14643"/>
<dbReference type="SIGNOR" id="Q14643"/>
<dbReference type="BioGRID-ORCS" id="3708">
    <property type="hits" value="7 hits in 1155 CRISPR screens"/>
</dbReference>
<dbReference type="ChiTaRS" id="ITPR1">
    <property type="organism name" value="human"/>
</dbReference>
<dbReference type="GeneWiki" id="ITPR1"/>
<dbReference type="GenomeRNAi" id="3708"/>
<dbReference type="Pharos" id="Q14643">
    <property type="development level" value="Tchem"/>
</dbReference>
<dbReference type="PRO" id="PR:Q14643"/>
<dbReference type="Proteomes" id="UP000005640">
    <property type="component" value="Chromosome 3"/>
</dbReference>
<dbReference type="RNAct" id="Q14643">
    <property type="molecule type" value="protein"/>
</dbReference>
<dbReference type="Bgee" id="ENSG00000150995">
    <property type="expression patterns" value="Expressed in cauda epididymis and 190 other cell types or tissues"/>
</dbReference>
<dbReference type="ExpressionAtlas" id="Q14643">
    <property type="expression patterns" value="baseline and differential"/>
</dbReference>
<dbReference type="GO" id="GO:0005955">
    <property type="term" value="C:calcineurin complex"/>
    <property type="evidence" value="ECO:0007669"/>
    <property type="project" value="Ensembl"/>
</dbReference>
<dbReference type="GO" id="GO:0005783">
    <property type="term" value="C:endoplasmic reticulum"/>
    <property type="evidence" value="ECO:0000250"/>
    <property type="project" value="UniProtKB"/>
</dbReference>
<dbReference type="GO" id="GO:0005789">
    <property type="term" value="C:endoplasmic reticulum membrane"/>
    <property type="evidence" value="ECO:0000314"/>
    <property type="project" value="UniProtKB"/>
</dbReference>
<dbReference type="GO" id="GO:0016020">
    <property type="term" value="C:membrane"/>
    <property type="evidence" value="ECO:0007005"/>
    <property type="project" value="UniProtKB"/>
</dbReference>
<dbReference type="GO" id="GO:0005637">
    <property type="term" value="C:nuclear inner membrane"/>
    <property type="evidence" value="ECO:0007669"/>
    <property type="project" value="Ensembl"/>
</dbReference>
<dbReference type="GO" id="GO:0005730">
    <property type="term" value="C:nucleolus"/>
    <property type="evidence" value="ECO:0007669"/>
    <property type="project" value="Ensembl"/>
</dbReference>
<dbReference type="GO" id="GO:0048471">
    <property type="term" value="C:perinuclear region of cytoplasm"/>
    <property type="evidence" value="ECO:0007669"/>
    <property type="project" value="UniProtKB-SubCell"/>
</dbReference>
<dbReference type="GO" id="GO:0005886">
    <property type="term" value="C:plasma membrane"/>
    <property type="evidence" value="ECO:0000318"/>
    <property type="project" value="GO_Central"/>
</dbReference>
<dbReference type="GO" id="GO:0031088">
    <property type="term" value="C:platelet dense granule membrane"/>
    <property type="evidence" value="ECO:0000314"/>
    <property type="project" value="BHF-UCL"/>
</dbReference>
<dbReference type="GO" id="GO:0031094">
    <property type="term" value="C:platelet dense tubular network"/>
    <property type="evidence" value="ECO:0000314"/>
    <property type="project" value="BHF-UCL"/>
</dbReference>
<dbReference type="GO" id="GO:0031095">
    <property type="term" value="C:platelet dense tubular network membrane"/>
    <property type="evidence" value="ECO:0000304"/>
    <property type="project" value="Reactome"/>
</dbReference>
<dbReference type="GO" id="GO:0014069">
    <property type="term" value="C:postsynaptic density"/>
    <property type="evidence" value="ECO:0007669"/>
    <property type="project" value="Ensembl"/>
</dbReference>
<dbReference type="GO" id="GO:0016529">
    <property type="term" value="C:sarcoplasmic reticulum"/>
    <property type="evidence" value="ECO:0000318"/>
    <property type="project" value="GO_Central"/>
</dbReference>
<dbReference type="GO" id="GO:0098685">
    <property type="term" value="C:Schaffer collateral - CA1 synapse"/>
    <property type="evidence" value="ECO:0007669"/>
    <property type="project" value="Ensembl"/>
</dbReference>
<dbReference type="GO" id="GO:0030667">
    <property type="term" value="C:secretory granule membrane"/>
    <property type="evidence" value="ECO:0000318"/>
    <property type="project" value="GO_Central"/>
</dbReference>
<dbReference type="GO" id="GO:0030658">
    <property type="term" value="C:transport vesicle membrane"/>
    <property type="evidence" value="ECO:0007669"/>
    <property type="project" value="UniProtKB-SubCell"/>
</dbReference>
<dbReference type="GO" id="GO:0005524">
    <property type="term" value="F:ATP binding"/>
    <property type="evidence" value="ECO:0007669"/>
    <property type="project" value="UniProtKB-KW"/>
</dbReference>
<dbReference type="GO" id="GO:0019855">
    <property type="term" value="F:calcium channel inhibitor activity"/>
    <property type="evidence" value="ECO:0000314"/>
    <property type="project" value="GO_Central"/>
</dbReference>
<dbReference type="GO" id="GO:0005509">
    <property type="term" value="F:calcium ion binding"/>
    <property type="evidence" value="ECO:0000318"/>
    <property type="project" value="GO_Central"/>
</dbReference>
<dbReference type="GO" id="GO:0015085">
    <property type="term" value="F:calcium ion transmembrane transporter activity"/>
    <property type="evidence" value="ECO:0000304"/>
    <property type="project" value="ProtInc"/>
</dbReference>
<dbReference type="GO" id="GO:0070679">
    <property type="term" value="F:inositol 1,4,5 trisphosphate binding"/>
    <property type="evidence" value="ECO:0000250"/>
    <property type="project" value="UniProtKB"/>
</dbReference>
<dbReference type="GO" id="GO:0098695">
    <property type="term" value="F:inositol 1,4,5-trisphosphate receptor activity involved in regulation of postsynaptic cytosolic calcium levels"/>
    <property type="evidence" value="ECO:0007669"/>
    <property type="project" value="Ensembl"/>
</dbReference>
<dbReference type="GO" id="GO:0005220">
    <property type="term" value="F:inositol 1,4,5-trisphosphate-gated calcium channel activity"/>
    <property type="evidence" value="ECO:0000314"/>
    <property type="project" value="UniProtKB"/>
</dbReference>
<dbReference type="GO" id="GO:0015278">
    <property type="term" value="F:intracellularly gated calcium channel activity"/>
    <property type="evidence" value="ECO:0000250"/>
    <property type="project" value="UniProtKB"/>
</dbReference>
<dbReference type="GO" id="GO:0035091">
    <property type="term" value="F:phosphatidylinositol binding"/>
    <property type="evidence" value="ECO:0000250"/>
    <property type="project" value="UniProtKB"/>
</dbReference>
<dbReference type="GO" id="GO:0019904">
    <property type="term" value="F:protein domain specific binding"/>
    <property type="evidence" value="ECO:0007669"/>
    <property type="project" value="Ensembl"/>
</dbReference>
<dbReference type="GO" id="GO:0042803">
    <property type="term" value="F:protein homodimerization activity"/>
    <property type="evidence" value="ECO:0007669"/>
    <property type="project" value="Ensembl"/>
</dbReference>
<dbReference type="GO" id="GO:0036444">
    <property type="term" value="P:calcium import into the mitochondrion"/>
    <property type="evidence" value="ECO:0000250"/>
    <property type="project" value="UniProtKB"/>
</dbReference>
<dbReference type="GO" id="GO:0006816">
    <property type="term" value="P:calcium ion transport"/>
    <property type="evidence" value="ECO:0000303"/>
    <property type="project" value="UniProtKB"/>
</dbReference>
<dbReference type="GO" id="GO:0000902">
    <property type="term" value="P:cell morphogenesis"/>
    <property type="evidence" value="ECO:0007669"/>
    <property type="project" value="Ensembl"/>
</dbReference>
<dbReference type="GO" id="GO:0032469">
    <property type="term" value="P:endoplasmic reticulum calcium ion homeostasis"/>
    <property type="evidence" value="ECO:0007669"/>
    <property type="project" value="Ensembl"/>
</dbReference>
<dbReference type="GO" id="GO:0042045">
    <property type="term" value="P:epithelial fluid transport"/>
    <property type="evidence" value="ECO:0007669"/>
    <property type="project" value="Ensembl"/>
</dbReference>
<dbReference type="GO" id="GO:0070059">
    <property type="term" value="P:intrinsic apoptotic signaling pathway in response to endoplasmic reticulum stress"/>
    <property type="evidence" value="ECO:0000250"/>
    <property type="project" value="UniProtKB"/>
</dbReference>
<dbReference type="GO" id="GO:1990806">
    <property type="term" value="P:ligand-gated ion channel signaling pathway"/>
    <property type="evidence" value="ECO:0007669"/>
    <property type="project" value="Ensembl"/>
</dbReference>
<dbReference type="GO" id="GO:0050849">
    <property type="term" value="P:negative regulation of calcium-mediated signaling"/>
    <property type="evidence" value="ECO:0000314"/>
    <property type="project" value="GO_Central"/>
</dbReference>
<dbReference type="GO" id="GO:0007207">
    <property type="term" value="P:phospholipase C-activating G protein-coupled acetylcholine receptor signaling pathway"/>
    <property type="evidence" value="ECO:0007669"/>
    <property type="project" value="Ensembl"/>
</dbReference>
<dbReference type="GO" id="GO:0043065">
    <property type="term" value="P:positive regulation of apoptotic process"/>
    <property type="evidence" value="ECO:0000314"/>
    <property type="project" value="UniProt"/>
</dbReference>
<dbReference type="GO" id="GO:0032024">
    <property type="term" value="P:positive regulation of insulin secretion"/>
    <property type="evidence" value="ECO:0007669"/>
    <property type="project" value="Ensembl"/>
</dbReference>
<dbReference type="GO" id="GO:0009791">
    <property type="term" value="P:post-embryonic development"/>
    <property type="evidence" value="ECO:0007669"/>
    <property type="project" value="Ensembl"/>
</dbReference>
<dbReference type="GO" id="GO:0051289">
    <property type="term" value="P:protein homotetramerization"/>
    <property type="evidence" value="ECO:0000250"/>
    <property type="project" value="UniProtKB"/>
</dbReference>
<dbReference type="GO" id="GO:0010506">
    <property type="term" value="P:regulation of autophagy"/>
    <property type="evidence" value="ECO:0000304"/>
    <property type="project" value="ParkinsonsUK-UCL"/>
</dbReference>
<dbReference type="GO" id="GO:0051480">
    <property type="term" value="P:regulation of cytosolic calcium ion concentration"/>
    <property type="evidence" value="ECO:0000250"/>
    <property type="project" value="UniProtKB"/>
</dbReference>
<dbReference type="GO" id="GO:0051209">
    <property type="term" value="P:release of sequestered calcium ion into cytosol"/>
    <property type="evidence" value="ECO:0000314"/>
    <property type="project" value="UniProt"/>
</dbReference>
<dbReference type="GO" id="GO:1903514">
    <property type="term" value="P:release of sequestered calcium ion into cytosol by endoplasmic reticulum"/>
    <property type="evidence" value="ECO:0000314"/>
    <property type="project" value="UniProtKB"/>
</dbReference>
<dbReference type="GO" id="GO:0001666">
    <property type="term" value="P:response to hypoxia"/>
    <property type="evidence" value="ECO:0000314"/>
    <property type="project" value="BHF-UCL"/>
</dbReference>
<dbReference type="GO" id="GO:0007165">
    <property type="term" value="P:signal transduction"/>
    <property type="evidence" value="ECO:0000303"/>
    <property type="project" value="UniProtKB"/>
</dbReference>
<dbReference type="GO" id="GO:0007338">
    <property type="term" value="P:single fertilization"/>
    <property type="evidence" value="ECO:0000250"/>
    <property type="project" value="UniProtKB"/>
</dbReference>
<dbReference type="GO" id="GO:0050882">
    <property type="term" value="P:voluntary musculoskeletal movement"/>
    <property type="evidence" value="ECO:0007669"/>
    <property type="project" value="Ensembl"/>
</dbReference>
<dbReference type="CDD" id="cd23287">
    <property type="entry name" value="beta-trefoil_MIR_ITPR1"/>
    <property type="match status" value="1"/>
</dbReference>
<dbReference type="FunFam" id="2.80.10.50:FF:000002">
    <property type="entry name" value="Inositol 1,4,5-trisphosphate receptor type 2"/>
    <property type="match status" value="1"/>
</dbReference>
<dbReference type="FunFam" id="1.10.287.70:FF:000079">
    <property type="entry name" value="Inositol 1,4,5-trisphosphate receptor type 3"/>
    <property type="match status" value="1"/>
</dbReference>
<dbReference type="FunFam" id="1.25.10.30:FF:000001">
    <property type="entry name" value="Inositol 1,4,5-trisphosphate receptor, type 2"/>
    <property type="match status" value="1"/>
</dbReference>
<dbReference type="Gene3D" id="1.10.287.70">
    <property type="match status" value="1"/>
</dbReference>
<dbReference type="Gene3D" id="2.80.10.50">
    <property type="match status" value="2"/>
</dbReference>
<dbReference type="Gene3D" id="1.25.10.30">
    <property type="entry name" value="IP3 receptor type 1 binding core, RIH domain"/>
    <property type="match status" value="1"/>
</dbReference>
<dbReference type="InterPro" id="IPR016024">
    <property type="entry name" value="ARM-type_fold"/>
</dbReference>
<dbReference type="InterPro" id="IPR014821">
    <property type="entry name" value="Ins145_P3_rcpt"/>
</dbReference>
<dbReference type="InterPro" id="IPR000493">
    <property type="entry name" value="InsP3_rcpt"/>
</dbReference>
<dbReference type="InterPro" id="IPR005821">
    <property type="entry name" value="Ion_trans_dom"/>
</dbReference>
<dbReference type="InterPro" id="IPR036300">
    <property type="entry name" value="MIR_dom_sf"/>
</dbReference>
<dbReference type="InterPro" id="IPR016093">
    <property type="entry name" value="MIR_motif"/>
</dbReference>
<dbReference type="InterPro" id="IPR013662">
    <property type="entry name" value="RIH_assoc-dom"/>
</dbReference>
<dbReference type="InterPro" id="IPR000699">
    <property type="entry name" value="RIH_dom"/>
</dbReference>
<dbReference type="InterPro" id="IPR015925">
    <property type="entry name" value="Ryanodine_IP3_receptor"/>
</dbReference>
<dbReference type="InterPro" id="IPR035910">
    <property type="entry name" value="RyR/IP3R_RIH_dom_sf"/>
</dbReference>
<dbReference type="PANTHER" id="PTHR45816:SF2">
    <property type="entry name" value="INOSITOL 1,4,5-TRISPHOSPHATE RECEPTOR"/>
    <property type="match status" value="1"/>
</dbReference>
<dbReference type="PANTHER" id="PTHR45816">
    <property type="entry name" value="MIR DOMAIN-CONTAINING PROTEIN"/>
    <property type="match status" value="1"/>
</dbReference>
<dbReference type="Pfam" id="PF08709">
    <property type="entry name" value="Ins145_P3_rec"/>
    <property type="match status" value="1"/>
</dbReference>
<dbReference type="Pfam" id="PF00520">
    <property type="entry name" value="Ion_trans"/>
    <property type="match status" value="1"/>
</dbReference>
<dbReference type="Pfam" id="PF02815">
    <property type="entry name" value="MIR"/>
    <property type="match status" value="1"/>
</dbReference>
<dbReference type="Pfam" id="PF08454">
    <property type="entry name" value="RIH_assoc"/>
    <property type="match status" value="1"/>
</dbReference>
<dbReference type="Pfam" id="PF01365">
    <property type="entry name" value="RYDR_ITPR"/>
    <property type="match status" value="2"/>
</dbReference>
<dbReference type="PRINTS" id="PR00779">
    <property type="entry name" value="INSP3RECEPTR"/>
</dbReference>
<dbReference type="SMART" id="SM00472">
    <property type="entry name" value="MIR"/>
    <property type="match status" value="4"/>
</dbReference>
<dbReference type="SUPFAM" id="SSF48371">
    <property type="entry name" value="ARM repeat"/>
    <property type="match status" value="1"/>
</dbReference>
<dbReference type="SUPFAM" id="SSF100909">
    <property type="entry name" value="IP3 receptor type 1 binding core, domain 2"/>
    <property type="match status" value="2"/>
</dbReference>
<dbReference type="SUPFAM" id="SSF82109">
    <property type="entry name" value="MIR domain"/>
    <property type="match status" value="2"/>
</dbReference>
<dbReference type="PROSITE" id="PS50919">
    <property type="entry name" value="MIR"/>
    <property type="match status" value="5"/>
</dbReference>
<gene>
    <name evidence="29 35" type="primary">ITPR1</name>
    <name evidence="30" type="synonym">INSP3R1</name>
</gene>
<sequence length="2758" mass="313929">MSDKMSSFLHIGDICSLYAEGSTNGFISTLGLVDDRCVVQPETGDLNNPPKKFRDCLFKLCPMNRYSAQKQFWKAAKPGANSTTDAVLLNKLHHAADLEKKQNETENRKLLGTVIQYGNVIQLLHLKSNKYLTVNKRLPALLEKNAMRVTLDEAGNEGSWFYIQPFYKLRSIGDSVVIGDKVVLNPVNAGQPLHASSHQLVDNPGCNEVNSVNCNTSWKIVLFMKWSDNKDDILKGGDVVRLFHAEQEKFLTCDEHRKKQHVFLRTTGRQSATSATSSKALWEVEVVQHDPCRGGAGYWNSLFRFKHLATGHYLAAEVDPDFEEECLEFQPSVDPDQDASRSRLRNAQEKMVYSLVSVPEGNDISSIFELDPTTLRGGDSLVPRNSYVRLRHLCTNTWVHSTNIPIDKEEEKPVMLKIGTSPVKEDKEAFAIVPVSPAEVRDLDFANDASKVLGSIAGKLEKGTITQNERRSVTKLLEDLVYFVTGGTNSGQDVLEVVFSKPNRERQKLMREQNILKQIFKLLQAPFTDCGDGPMLRLEELGDQRHAPFRHICRLCYRVLRHSQQDYRKNQEYIAKQFGFMQKQIGYDVLAEDTITALLHNNRKLLEKHITAAEIDTFVSLVRKNREPRFLDYLSDLCVSMNKSIPVTQELICKAVLNPTNADILIETKLVLSRFEFEGVSSTGENALEAGEDEEEVWLFWRDSNKEIRSKSVRELAQDAKEGQKEDRDVLSYYRYQLNLFARMCLDRQYLAINEISGQLDVDLILRCMSDENLPYDLRASFCRLMLHMHVDRDPQEQVTPVKYARLWSEIPSEIAIDDYDSSGASKDEIKERFAQTMEFVEEYLRDVVCQRFPFSDKEKNKLTFEVVNLARNLIYFGFYNFSDLLRLTKILLAILDCVHVTTIFPISKMAKGEENKGNNDVEKLKSSNVMRSIHGVGELMTQVVLRGGGFLPMTPMAAAPEGNVKQAEPEKEDIMVMDTKLKIIEILQFILNVRLDYRISCLLCIFKREFDESNSQTSETSSGNSSQEGPSNVPGALDFEHIEEQAEGIFGGSEENTPLDLDDHGGRTFLRVLLHLTMHDYPPLVSGALQLLFRHFSQRQEVLQAFKQVQLLVTSQDVDNYKQIKQDLDQLRSIVEKSELWVYKGQGPDETMDGASGENEHKKTEEGNNKPQKHESTSSYNYRVVKEILIRLSKLCVQESASVRKSRKQQQRLLRNMGAHAVVLELLQIPYEKAEDTKMQEIMRLAHEFLQNFCAGNQQNQALLHKHINLFLNPGILEAVTMQHIFMNNFQLCSEINERVVQHFVHCIETHGRNVQYIKFLQTIVKAEGKFIKKCQDMVMAELVNSGEDVLVFYNDRASFQTLIQMMRSERDRMDENSPLMYHIHLVELLAVCTEGKNVYTEIKCNSLLPLDDIVRVVTHEDCIPEVKIAYINFLNHCYVDTEVEMKEIYTSNHMWKLFENFLVDICRACNNTSDRKHADSILEKYVTEIVMSIVTTFFSSPFSDQSTTLQTRQPVFVQLLQGVFRVYHCNWLMPSQKASVESCIRVLSDVAKSRAIAIPVDLDSQVNNLFLKSHSIVQKTAMNWRLSARNAARRDSVLAASRDYRNIIERLQDIVSALEDRLRPLVQAELSVLVDVLHRPELLFPENTDARRKCESGGFICKLIKHTKQLLEENEEKLCIKVLQTLREMMTKDRGYGEKLISIDELDNAELPPAPDSENATEELEPSPPLRQLEDHKRGEALRQVLVNRYYGNVRPSGRRESLTSFGNGPLSAGGPGKPGGGGGGSGSSSMSRGEMSLAEVQCHLDKEGASNLVIDLIMNASSDRVFHESILLAIALLEGGNTTIQHSFFCRLTEDKKSEKFFKVFYDRMKVAQQEIKATVTVNTSDLGNKKKDDEVDRDAPSRKKAKEPTTQITEEVRDQLLEASAATRKAFTTFRREADPDDHYQPGEGTQATADKAKDDLEMSAVITIMQPILRFLQLLCENHNRDLQNFLRCQNNKTNYNLVCETLQFLDCICGSTTGGLGLLGLYINEKNVALINQTLESLTEYCQGPCHENQNCIATHESNGIDIITALILNDINPLGKKRMDLVLELKNNASKLLLAIMESRHDSENAERILYNMRPKELVEVIKKAYMQGEVEFEDGENGEDGAASPRNVGHNIYILAHQLARHNKELQSMLKPGGQVDGDEALEFYAKHTAQIEIVRLDRTMEQIVFPVPSICEFLTKESKLRIYYTTERDEQGSKINDFFLRSEDLFNEMNWQKKLRAQPVLYWCARNMSFWSSISFNLAVLMNLLVAFFYPFKGVRGGTLEPHWSGLLWTAMLISLAIVIALPKPHGIRALIASTILRLIFSVGLQPTLFLLGAFNVCNKIIFLMSFVGNCGTFTRGYRAMVLDVEFLYHLLYLVICAMGLFVHEFFYSLLLFDLVYREETLLNVIKSVTRNGRSIILTAVLALILVYLFSIVGYLFFKDDFILEVDRLPNETAVPETGESLASEFLFSDVCRVESGENCSSPAPREELVPAEETEQDKEHTCETLLMCIVTVLSHGLRSGGGVGDVLRKPSKEEPLFAARVIYDLLFFFMVIIIVLNLIFGVIIDTFADLRSEKQKKEEILKTTCFICGLERDKFDNKTVTFEEHIKEEHNMWHYLCFIVLVKVKDSTEYTGPESYVAEMIKERNLDWFPRMRAMSLVSSDSEGEQNELRNLQEKLESTMKLVTNLSGQLSELKDQMTEQRKQKQRIGLLGHPPHMNVNPQQPA</sequence>
<organism>
    <name type="scientific">Homo sapiens</name>
    <name type="common">Human</name>
    <dbReference type="NCBI Taxonomy" id="9606"/>
    <lineage>
        <taxon>Eukaryota</taxon>
        <taxon>Metazoa</taxon>
        <taxon>Chordata</taxon>
        <taxon>Craniata</taxon>
        <taxon>Vertebrata</taxon>
        <taxon>Euteleostomi</taxon>
        <taxon>Mammalia</taxon>
        <taxon>Eutheria</taxon>
        <taxon>Euarchontoglires</taxon>
        <taxon>Primates</taxon>
        <taxon>Haplorrhini</taxon>
        <taxon>Catarrhini</taxon>
        <taxon>Hominidae</taxon>
        <taxon>Homo</taxon>
    </lineage>
</organism>
<accession>Q14643</accession>
<accession>E7EPX7</accession>
<accession>E9PDE9</accession>
<accession>Q14660</accession>
<accession>Q99897</accession>
<feature type="chain" id="PRO_0000153920" description="Inositol 1,4,5-trisphosphate-gated calcium channel ITPR1">
    <location>
        <begin position="1"/>
        <end position="2758"/>
    </location>
</feature>
<feature type="topological domain" description="Cytoplasmic" evidence="2 5">
    <location>
        <begin position="1"/>
        <end position="2282"/>
    </location>
</feature>
<feature type="transmembrane region" description="Helical" evidence="2 5">
    <location>
        <begin position="2283"/>
        <end position="2303"/>
    </location>
</feature>
<feature type="topological domain" description="Lumenal" evidence="2 5">
    <location>
        <begin position="2304"/>
        <end position="2314"/>
    </location>
</feature>
<feature type="transmembrane region" description="Helical" evidence="2 5">
    <location>
        <begin position="2315"/>
        <end position="2335"/>
    </location>
</feature>
<feature type="topological domain" description="Cytoplasmic" evidence="2 5">
    <location>
        <begin position="2336"/>
        <end position="2361"/>
    </location>
</feature>
<feature type="transmembrane region" description="Helical" evidence="2 5">
    <location>
        <begin position="2362"/>
        <end position="2382"/>
    </location>
</feature>
<feature type="topological domain" description="Lumenal" evidence="2 5">
    <location>
        <begin position="2383"/>
        <end position="2405"/>
    </location>
</feature>
<feature type="transmembrane region" description="Helical" evidence="2 5">
    <location>
        <begin position="2406"/>
        <end position="2426"/>
    </location>
</feature>
<feature type="topological domain" description="Cytoplasmic" evidence="2 5">
    <location>
        <begin position="2427"/>
        <end position="2448"/>
    </location>
</feature>
<feature type="transmembrane region" description="Helical" evidence="2 5">
    <location>
        <begin position="2449"/>
        <end position="2469"/>
    </location>
</feature>
<feature type="topological domain" description="Lumenal" evidence="2 5">
    <location>
        <begin position="2470"/>
        <end position="2577"/>
    </location>
</feature>
<feature type="transmembrane region" description="Helical" evidence="2 5">
    <location>
        <begin position="2578"/>
        <end position="2598"/>
    </location>
</feature>
<feature type="topological domain" description="Cytoplasmic" evidence="5 27">
    <location>
        <begin position="2599"/>
        <end position="2758"/>
    </location>
</feature>
<feature type="domain" description="MIR 1" evidence="6">
    <location>
        <begin position="112"/>
        <end position="166"/>
    </location>
</feature>
<feature type="domain" description="MIR 2" evidence="6">
    <location>
        <begin position="173"/>
        <end position="223"/>
    </location>
</feature>
<feature type="domain" description="MIR 3" evidence="6">
    <location>
        <begin position="231"/>
        <end position="287"/>
    </location>
</feature>
<feature type="domain" description="MIR 4" evidence="6">
    <location>
        <begin position="294"/>
        <end position="373"/>
    </location>
</feature>
<feature type="domain" description="MIR 5" evidence="6">
    <location>
        <begin position="379"/>
        <end position="435"/>
    </location>
</feature>
<feature type="region of interest" description="Disordered" evidence="7">
    <location>
        <begin position="1015"/>
        <end position="1036"/>
    </location>
</feature>
<feature type="region of interest" description="Disordered" evidence="7">
    <location>
        <begin position="1146"/>
        <end position="1178"/>
    </location>
</feature>
<feature type="region of interest" description="Disordered" evidence="7">
    <location>
        <begin position="1708"/>
        <end position="1740"/>
    </location>
</feature>
<feature type="region of interest" description="Disordered" evidence="7">
    <location>
        <begin position="1760"/>
        <end position="1796"/>
    </location>
</feature>
<feature type="region of interest" description="Disordered" evidence="7">
    <location>
        <begin position="1890"/>
        <end position="1915"/>
    </location>
</feature>
<feature type="region of interest" description="Disordered" evidence="7">
    <location>
        <begin position="1939"/>
        <end position="1960"/>
    </location>
</feature>
<feature type="region of interest" description="Interaction with ERP44" evidence="1">
    <location>
        <begin position="2472"/>
        <end position="2537"/>
    </location>
</feature>
<feature type="region of interest" description="Disordered" evidence="7">
    <location>
        <begin position="2729"/>
        <end position="2758"/>
    </location>
</feature>
<feature type="compositionally biased region" description="Low complexity" evidence="7">
    <location>
        <begin position="1015"/>
        <end position="1030"/>
    </location>
</feature>
<feature type="compositionally biased region" description="Basic and acidic residues" evidence="7">
    <location>
        <begin position="1159"/>
        <end position="1177"/>
    </location>
</feature>
<feature type="compositionally biased region" description="Gly residues" evidence="7">
    <location>
        <begin position="1774"/>
        <end position="1789"/>
    </location>
</feature>
<feature type="compositionally biased region" description="Basic and acidic residues" evidence="7">
    <location>
        <begin position="1891"/>
        <end position="1905"/>
    </location>
</feature>
<feature type="compositionally biased region" description="Basic and acidic residues" evidence="7">
    <location>
        <begin position="1939"/>
        <end position="1949"/>
    </location>
</feature>
<feature type="binding site" evidence="2">
    <location>
        <position position="265"/>
    </location>
    <ligand>
        <name>1D-myo-inositol 1,4,5-trisphosphate</name>
        <dbReference type="ChEBI" id="CHEBI:203600"/>
    </ligand>
</feature>
<feature type="binding site" evidence="2">
    <location>
        <position position="267"/>
    </location>
    <ligand>
        <name>1D-myo-inositol 1,4,5-trisphosphate</name>
        <dbReference type="ChEBI" id="CHEBI:203600"/>
    </ligand>
</feature>
<feature type="binding site" evidence="2">
    <location>
        <position position="268"/>
    </location>
    <ligand>
        <name>1D-myo-inositol 1,4,5-trisphosphate</name>
        <dbReference type="ChEBI" id="CHEBI:203600"/>
    </ligand>
</feature>
<feature type="binding site" evidence="2">
    <location>
        <position position="269"/>
    </location>
    <ligand>
        <name>1D-myo-inositol 1,4,5-trisphosphate</name>
        <dbReference type="ChEBI" id="CHEBI:203600"/>
    </ligand>
</feature>
<feature type="binding site" evidence="1">
    <location>
        <position position="508"/>
    </location>
    <ligand>
        <name>1D-myo-inositol 1,4,5-trisphosphate</name>
        <dbReference type="ChEBI" id="CHEBI:203600"/>
    </ligand>
</feature>
<feature type="binding site" evidence="2">
    <location>
        <position position="511"/>
    </location>
    <ligand>
        <name>1D-myo-inositol 1,4,5-trisphosphate</name>
        <dbReference type="ChEBI" id="CHEBI:203600"/>
    </ligand>
</feature>
<feature type="binding site" evidence="2">
    <location>
        <position position="567"/>
    </location>
    <ligand>
        <name>1D-myo-inositol 1,4,5-trisphosphate</name>
        <dbReference type="ChEBI" id="CHEBI:203600"/>
    </ligand>
</feature>
<feature type="binding site" evidence="2">
    <location>
        <position position="568"/>
    </location>
    <ligand>
        <name>1D-myo-inositol 1,4,5-trisphosphate</name>
        <dbReference type="ChEBI" id="CHEBI:203600"/>
    </ligand>
</feature>
<feature type="binding site" evidence="3">
    <location>
        <position position="748"/>
    </location>
    <ligand>
        <name>Ca(2+)</name>
        <dbReference type="ChEBI" id="CHEBI:29108"/>
        <label>1</label>
        <note>low affinity</note>
    </ligand>
</feature>
<feature type="binding site" evidence="3">
    <location>
        <position position="1137"/>
    </location>
    <ligand>
        <name>Ca(2+)</name>
        <dbReference type="ChEBI" id="CHEBI:29108"/>
        <label>1</label>
        <note>low affinity</note>
    </ligand>
</feature>
<feature type="binding site" evidence="3">
    <location>
        <position position="1140"/>
    </location>
    <ligand>
        <name>Ca(2+)</name>
        <dbReference type="ChEBI" id="CHEBI:29108"/>
        <label>1</label>
        <note>low affinity</note>
    </ligand>
</feature>
<feature type="binding site" evidence="3">
    <location>
        <position position="1986"/>
    </location>
    <ligand>
        <name>Ca(2+)</name>
        <dbReference type="ChEBI" id="CHEBI:29108"/>
        <label>2</label>
        <note>high affinity</note>
    </ligand>
</feature>
<feature type="binding site" evidence="3">
    <location>
        <position position="2050"/>
    </location>
    <ligand>
        <name>Ca(2+)</name>
        <dbReference type="ChEBI" id="CHEBI:29108"/>
        <label>2</label>
        <note>high affinity</note>
    </ligand>
</feature>
<feature type="binding site" evidence="2">
    <location>
        <position position="2229"/>
    </location>
    <ligand>
        <name>ATP</name>
        <dbReference type="ChEBI" id="CHEBI:30616"/>
    </ligand>
</feature>
<feature type="binding site" evidence="2">
    <location>
        <position position="2232"/>
    </location>
    <ligand>
        <name>ATP</name>
        <dbReference type="ChEBI" id="CHEBI:30616"/>
    </ligand>
</feature>
<feature type="binding site" evidence="2">
    <location>
        <position position="2619"/>
    </location>
    <ligand>
        <name>ATP</name>
        <dbReference type="ChEBI" id="CHEBI:30616"/>
    </ligand>
</feature>
<feature type="binding site" evidence="2">
    <location>
        <position position="2619"/>
    </location>
    <ligand>
        <name>Zn(2+)</name>
        <dbReference type="ChEBI" id="CHEBI:29105"/>
    </ligand>
</feature>
<feature type="binding site" evidence="2">
    <location>
        <position position="2620"/>
    </location>
    <ligand>
        <name>ATP</name>
        <dbReference type="ChEBI" id="CHEBI:30616"/>
    </ligand>
</feature>
<feature type="binding site" evidence="2">
    <location>
        <position position="2622"/>
    </location>
    <ligand>
        <name>Zn(2+)</name>
        <dbReference type="ChEBI" id="CHEBI:29105"/>
    </ligand>
</feature>
<feature type="binding site" evidence="2">
    <location>
        <position position="2639"/>
    </location>
    <ligand>
        <name>Zn(2+)</name>
        <dbReference type="ChEBI" id="CHEBI:29105"/>
    </ligand>
</feature>
<feature type="binding site" evidence="2">
    <location>
        <position position="2644"/>
    </location>
    <ligand>
        <name>ATP</name>
        <dbReference type="ChEBI" id="CHEBI:30616"/>
    </ligand>
</feature>
<feature type="binding site" evidence="2">
    <location>
        <position position="2644"/>
    </location>
    <ligand>
        <name>Zn(2+)</name>
        <dbReference type="ChEBI" id="CHEBI:29105"/>
    </ligand>
</feature>
<feature type="binding site" evidence="2">
    <location>
        <position position="2646"/>
    </location>
    <ligand>
        <name>ATP</name>
        <dbReference type="ChEBI" id="CHEBI:30616"/>
    </ligand>
</feature>
<feature type="binding site" evidence="3">
    <location>
        <position position="2662"/>
    </location>
    <ligand>
        <name>Ca(2+)</name>
        <dbReference type="ChEBI" id="CHEBI:29108"/>
        <label>2</label>
        <note>high affinity</note>
    </ligand>
</feature>
<feature type="modified residue" description="Phosphoserine" evidence="36 37 38 39 40">
    <location>
        <position position="1598"/>
    </location>
</feature>
<feature type="modified residue" description="Phosphoserine; by PKA" evidence="37 39">
    <location>
        <position position="1764"/>
    </location>
</feature>
<feature type="lipid moiety-binding region" description="S-palmitoyl cysteine" evidence="1">
    <location>
        <position position="56"/>
    </location>
</feature>
<feature type="lipid moiety-binding region" description="S-palmitoyl cysteine" evidence="1">
    <location>
        <position position="850"/>
    </location>
</feature>
<feature type="glycosylation site" description="N-linked (GlcNAc...) asparagine" evidence="16">
    <location>
        <position position="2512"/>
    </location>
</feature>
<feature type="disulfide bond" evidence="2">
    <location>
        <begin position="2536"/>
        <end position="2542"/>
    </location>
</feature>
<feature type="cross-link" description="Glycyl lysine isopeptide (Lys-Gly) (interchain with G-Cter in ubiquitin)" evidence="2">
    <location>
        <position position="917"/>
    </location>
</feature>
<feature type="cross-link" description="Glycyl lysine isopeptide (Lys-Gly) (interchain with G-Cter in ubiquitin)" evidence="2">
    <location>
        <position position="972"/>
    </location>
</feature>
<feature type="cross-link" description="Glycyl lysine isopeptide (Lys-Gly) (interchain with G-Cter in ubiquitin)" evidence="2">
    <location>
        <position position="1581"/>
    </location>
</feature>
<feature type="cross-link" description="Glycyl lysine isopeptide (Lys-Gly) (interchain with G-Cter in ubiquitin)" evidence="2">
    <location>
        <position position="1780"/>
    </location>
</feature>
<feature type="cross-link" description="Glycyl lysine isopeptide (Lys-Gly) (interchain with G-Cter in ubiquitin)" evidence="2">
    <location>
        <position position="1893"/>
    </location>
</feature>
<feature type="cross-link" description="Glycyl lysine isopeptide (Lys-Gly) (interchain with G-Cter in ubiquitin)" evidence="2">
    <location>
        <position position="1894"/>
    </location>
</feature>
<feature type="cross-link" description="Glycyl lysine isopeptide (Lys-Gly) (interchain with G-Cter in ubiquitin)" evidence="2">
    <location>
        <position position="1895"/>
    </location>
</feature>
<feature type="cross-link" description="Glycyl lysine isopeptide (Lys-Gly) (interchain with G-Cter in ubiquitin)" evidence="2">
    <location>
        <position position="1910"/>
    </location>
</feature>
<feature type="cross-link" description="Glycyl lysine isopeptide (Lys-Gly) (interchain with G-Cter in ubiquitin)" evidence="2">
    <location>
        <position position="1933"/>
    </location>
</feature>
<feature type="cross-link" description="Glycyl lysine isopeptide (Lys-Gly) (interchain with G-Cter in ubiquitin)" evidence="2">
    <location>
        <position position="2127"/>
    </location>
</feature>
<feature type="cross-link" description="Glycyl lysine isopeptide (Lys-Gly) (interchain with G-Cter in ubiquitin)" evidence="2">
    <location>
        <position position="2266"/>
    </location>
</feature>
<feature type="splice variant" id="VSP_002687" description="In isoform 2, isoform 4, isoform 5, isoform 7 and isoform 8." evidence="28 30 31">
    <location>
        <begin position="322"/>
        <end position="336"/>
    </location>
</feature>
<feature type="splice variant" id="VSP_002688" description="In isoform 3, isoform 4, isoform 5 and isoform 8." evidence="29 30 31">
    <location>
        <begin position="919"/>
        <end position="927"/>
    </location>
</feature>
<feature type="splice variant" id="VSP_002689" description="In isoform 3 and isoform 4." evidence="29 30 31">
    <location>
        <begin position="1702"/>
        <end position="1724"/>
    </location>
</feature>
<feature type="splice variant" id="VSP_002690" description="In isoform 3, isoform 4, isoform 6, isoform 7 and isoform 8." evidence="29 30 31">
    <location>
        <begin position="1725"/>
        <end position="1740"/>
    </location>
</feature>
<feature type="sequence variant" id="VAR_069567" description="In SCA29; dbSNP:rs397514536." evidence="18">
    <original>N</original>
    <variation>D</variation>
    <location>
        <position position="602"/>
    </location>
</feature>
<feature type="sequence variant" id="VAR_037005" description="In dbSNP:rs35789999.">
    <original>M</original>
    <variation>V</variation>
    <location>
        <position position="769"/>
    </location>
</feature>
<feature type="sequence variant" id="VAR_081167" description="In SCA15; dbSNP:rs121912425." evidence="15">
    <original>P</original>
    <variation>L</variation>
    <location>
        <position position="1083"/>
    </location>
</feature>
<feature type="sequence variant" id="VAR_037006" description="In dbSNP:rs3749383.">
    <original>I</original>
    <variation>V</variation>
    <location>
        <position position="1430"/>
    </location>
</feature>
<feature type="sequence variant" id="VAR_069569" description="In SCA29; dbSNP:rs397514535." evidence="18 21">
    <original>V</original>
    <variation>M</variation>
    <location>
        <position position="1562"/>
    </location>
</feature>
<feature type="sequence variant" id="VAR_077462" description="In GLSP." evidence="23">
    <original>E</original>
    <variation>Q</variation>
    <location>
        <position position="2109"/>
    </location>
</feature>
<feature type="sequence variant" id="VAR_077463" description="In GLSP; dbSNP:rs752281590." evidence="23">
    <original>G</original>
    <variation>R</variation>
    <location>
        <position position="2554"/>
    </location>
</feature>
<feature type="sequence variant" id="VAR_077464" description="In GLSP; dbSNP:rs878853176." evidence="22">
    <original>F</original>
    <variation>L</variation>
    <location>
        <position position="2601"/>
    </location>
</feature>
<feature type="sequence variant" id="VAR_077465" description="In GLSP; alters calcium release of isoform 3; dbSNP:rs878853175." evidence="22 23">
    <location>
        <position position="2611"/>
    </location>
</feature>
<feature type="mutagenesis site" description="Abolishes interaction with AHCYL1." evidence="12">
    <original>R</original>
    <variation>Q</variation>
    <location>
        <position position="241"/>
    </location>
</feature>
<feature type="mutagenesis site" description="Abolishes interaction with AHCYL1." evidence="12">
    <original>K</original>
    <variation>Q</variation>
    <location>
        <position position="249"/>
    </location>
</feature>
<feature type="mutagenesis site" description="No effect on interaction with AHCYL1." evidence="12">
    <original>R</original>
    <variation>Q</variation>
    <location>
        <position position="265"/>
    </location>
</feature>
<feature type="mutagenesis site" description="No effect on interaction with AHCYL1." evidence="12">
    <original>T</original>
    <variation>A</variation>
    <location>
        <position position="267"/>
    </location>
</feature>
<feature type="mutagenesis site" description="Abolishes interaction with AHCYL1." evidence="12">
    <original>R</original>
    <variation>Q</variation>
    <location>
        <position position="269"/>
    </location>
</feature>
<feature type="mutagenesis site" description="Abolishes interaction with AHCYL1." evidence="12">
    <original>R</original>
    <variation>Q</variation>
    <location>
        <position position="504"/>
    </location>
</feature>
<feature type="mutagenesis site" description="Abolishes interaction with AHCYL1." evidence="12">
    <original>R</original>
    <variation>Q</variation>
    <location>
        <position position="506"/>
    </location>
</feature>
<feature type="mutagenesis site" description="Abolishes interaction with AHCYL1." evidence="12">
    <original>K</original>
    <variation>A</variation>
    <location>
        <position position="508"/>
    </location>
</feature>
<feature type="mutagenesis site" description="Abolishes interaction with AHCYL1." evidence="12">
    <original>R</original>
    <variation>A</variation>
    <location>
        <position position="511"/>
    </location>
</feature>
<feature type="mutagenesis site" description="Abolishes interaction with AHCYL1." evidence="12">
    <original>Y</original>
    <variation>A</variation>
    <location>
        <position position="567"/>
    </location>
</feature>
<feature type="mutagenesis site" description="Abolishes interaction with AHCYL1." evidence="12">
    <original>R</original>
    <variation>Q</variation>
    <location>
        <position position="568"/>
    </location>
</feature>
<feature type="mutagenesis site" description="Abolishes interaction with AHCYL1." evidence="12">
    <original>K</original>
    <variation>A</variation>
    <location>
        <position position="569"/>
    </location>
</feature>
<feature type="mutagenesis site" description="Creates a dileucine motif and recruits clathrin." evidence="25">
    <original>P</original>
    <variation>L</variation>
    <location>
        <position position="1059"/>
    </location>
</feature>
<feature type="sequence conflict" description="In Ref. 6; AAD14386." evidence="32" ref="6">
    <original>AIAIPVDLDSQVNNLFLKSHSIVQK</original>
    <variation>HCHSRGPGQPSQQPLSQVPQHCAE</variation>
    <location>
        <begin position="1557"/>
        <end position="1581"/>
    </location>
</feature>
<feature type="sequence conflict" description="In Ref. 2; AAB04947." evidence="32" ref="2">
    <original>F</original>
    <variation>L</variation>
    <location>
        <position position="2302"/>
    </location>
</feature>
<feature type="sequence conflict" description="In Ref. 2; AAB04947." evidence="32" ref="2">
    <original>F</original>
    <variation>L</variation>
    <location>
        <position position="2305"/>
    </location>
</feature>
<feature type="sequence conflict" description="In Ref. 4; U23850." evidence="32" ref="4">
    <original>S</original>
    <variation>A</variation>
    <location>
        <position position="2448"/>
    </location>
</feature>